<protein>
    <recommendedName>
        <fullName evidence="43">TAR DNA-binding protein 43</fullName>
        <shortName evidence="43">TDP-43</shortName>
    </recommendedName>
</protein>
<organism>
    <name type="scientific">Homo sapiens</name>
    <name type="common">Human</name>
    <dbReference type="NCBI Taxonomy" id="9606"/>
    <lineage>
        <taxon>Eukaryota</taxon>
        <taxon>Metazoa</taxon>
        <taxon>Chordata</taxon>
        <taxon>Craniata</taxon>
        <taxon>Vertebrata</taxon>
        <taxon>Euteleostomi</taxon>
        <taxon>Mammalia</taxon>
        <taxon>Eutheria</taxon>
        <taxon>Euarchontoglires</taxon>
        <taxon>Primates</taxon>
        <taxon>Haplorrhini</taxon>
        <taxon>Catarrhini</taxon>
        <taxon>Hominidae</taxon>
        <taxon>Homo</taxon>
    </lineage>
</organism>
<evidence type="ECO:0000250" key="1">
    <source>
        <dbReference type="UniProtKB" id="Q921F2"/>
    </source>
</evidence>
<evidence type="ECO:0000255" key="2">
    <source>
        <dbReference type="PROSITE-ProRule" id="PRU00176"/>
    </source>
</evidence>
<evidence type="ECO:0000256" key="3">
    <source>
        <dbReference type="SAM" id="MobiDB-lite"/>
    </source>
</evidence>
<evidence type="ECO:0000269" key="4">
    <source>
    </source>
</evidence>
<evidence type="ECO:0000269" key="5">
    <source>
    </source>
</evidence>
<evidence type="ECO:0000269" key="6">
    <source>
    </source>
</evidence>
<evidence type="ECO:0000269" key="7">
    <source>
    </source>
</evidence>
<evidence type="ECO:0000269" key="8">
    <source>
    </source>
</evidence>
<evidence type="ECO:0000269" key="9">
    <source>
    </source>
</evidence>
<evidence type="ECO:0000269" key="10">
    <source>
    </source>
</evidence>
<evidence type="ECO:0000269" key="11">
    <source>
    </source>
</evidence>
<evidence type="ECO:0000269" key="12">
    <source>
    </source>
</evidence>
<evidence type="ECO:0000269" key="13">
    <source>
    </source>
</evidence>
<evidence type="ECO:0000269" key="14">
    <source>
    </source>
</evidence>
<evidence type="ECO:0000269" key="15">
    <source>
    </source>
</evidence>
<evidence type="ECO:0000269" key="16">
    <source>
    </source>
</evidence>
<evidence type="ECO:0000269" key="17">
    <source>
    </source>
</evidence>
<evidence type="ECO:0000269" key="18">
    <source>
    </source>
</evidence>
<evidence type="ECO:0000269" key="19">
    <source>
    </source>
</evidence>
<evidence type="ECO:0000269" key="20">
    <source>
    </source>
</evidence>
<evidence type="ECO:0000269" key="21">
    <source>
    </source>
</evidence>
<evidence type="ECO:0000269" key="22">
    <source>
    </source>
</evidence>
<evidence type="ECO:0000269" key="23">
    <source>
    </source>
</evidence>
<evidence type="ECO:0000269" key="24">
    <source>
    </source>
</evidence>
<evidence type="ECO:0000269" key="25">
    <source>
    </source>
</evidence>
<evidence type="ECO:0000269" key="26">
    <source>
    </source>
</evidence>
<evidence type="ECO:0000269" key="27">
    <source>
    </source>
</evidence>
<evidence type="ECO:0000269" key="28">
    <source>
    </source>
</evidence>
<evidence type="ECO:0000269" key="29">
    <source>
    </source>
</evidence>
<evidence type="ECO:0000269" key="30">
    <source>
    </source>
</evidence>
<evidence type="ECO:0000269" key="31">
    <source>
    </source>
</evidence>
<evidence type="ECO:0000269" key="32">
    <source>
    </source>
</evidence>
<evidence type="ECO:0000269" key="33">
    <source>
    </source>
</evidence>
<evidence type="ECO:0000269" key="34">
    <source>
    </source>
</evidence>
<evidence type="ECO:0000269" key="35">
    <source>
    </source>
</evidence>
<evidence type="ECO:0000269" key="36">
    <source>
    </source>
</evidence>
<evidence type="ECO:0000269" key="37">
    <source>
    </source>
</evidence>
<evidence type="ECO:0000269" key="38">
    <source>
    </source>
</evidence>
<evidence type="ECO:0000269" key="39">
    <source>
    </source>
</evidence>
<evidence type="ECO:0000269" key="40">
    <source>
    </source>
</evidence>
<evidence type="ECO:0000303" key="41">
    <source>
    </source>
</evidence>
<evidence type="ECO:0000303" key="42">
    <source>
    </source>
</evidence>
<evidence type="ECO:0000303" key="43">
    <source>
    </source>
</evidence>
<evidence type="ECO:0000305" key="44"/>
<evidence type="ECO:0000312" key="45">
    <source>
        <dbReference type="HGNC" id="HGNC:11571"/>
    </source>
</evidence>
<evidence type="ECO:0007744" key="46">
    <source>
    </source>
</evidence>
<evidence type="ECO:0007744" key="47">
    <source>
    </source>
</evidence>
<evidence type="ECO:0007744" key="48">
    <source>
    </source>
</evidence>
<evidence type="ECO:0007744" key="49">
    <source>
    </source>
</evidence>
<evidence type="ECO:0007744" key="50">
    <source>
    </source>
</evidence>
<evidence type="ECO:0007744" key="51">
    <source>
    </source>
</evidence>
<evidence type="ECO:0007744" key="52">
    <source>
    </source>
</evidence>
<evidence type="ECO:0007829" key="53">
    <source>
        <dbReference type="PDB" id="1WF0"/>
    </source>
</evidence>
<evidence type="ECO:0007829" key="54">
    <source>
        <dbReference type="PDB" id="2N3X"/>
    </source>
</evidence>
<evidence type="ECO:0007829" key="55">
    <source>
        <dbReference type="PDB" id="2N4P"/>
    </source>
</evidence>
<evidence type="ECO:0007829" key="56">
    <source>
        <dbReference type="PDB" id="4BS2"/>
    </source>
</evidence>
<evidence type="ECO:0007829" key="57">
    <source>
        <dbReference type="PDB" id="4Y0F"/>
    </source>
</evidence>
<evidence type="ECO:0007829" key="58">
    <source>
        <dbReference type="PDB" id="5MDI"/>
    </source>
</evidence>
<evidence type="ECO:0007829" key="59">
    <source>
        <dbReference type="PDB" id="5X4F"/>
    </source>
</evidence>
<evidence type="ECO:0007829" key="60">
    <source>
        <dbReference type="PDB" id="6B1G"/>
    </source>
</evidence>
<evidence type="ECO:0007829" key="61">
    <source>
        <dbReference type="PDB" id="6CFH"/>
    </source>
</evidence>
<evidence type="ECO:0007829" key="62">
    <source>
        <dbReference type="PDB" id="7KWZ"/>
    </source>
</evidence>
<evidence type="ECO:0007829" key="63">
    <source>
        <dbReference type="PDB" id="7N9H"/>
    </source>
</evidence>
<evidence type="ECO:0007829" key="64">
    <source>
        <dbReference type="PDB" id="7PY2"/>
    </source>
</evidence>
<evidence type="ECO:0007829" key="65">
    <source>
        <dbReference type="PDB" id="8CG3"/>
    </source>
</evidence>
<evidence type="ECO:0007829" key="66">
    <source>
        <dbReference type="PDB" id="8CGG"/>
    </source>
</evidence>
<comment type="function">
    <text evidence="4 7 19 20 24 27 28 30 31 33 34 36 37 38 39">RNA-binding protein that is involved in various steps of RNA biogenesis and processing (PubMed:23519609). Preferentially binds, via its two RNA recognition motifs RRM1 and RRM2, to GU-repeats on RNA molecules predominantly localized within long introns and in the 3'UTR of mRNAs (PubMed:23519609, PubMed:24240615, PubMed:24464995). In turn, regulates the splicing of many non-coding and protein-coding RNAs including proteins involved in neuronal survival, as well as mRNAs that encode proteins relevant for neurodegenerative diseases (PubMed:21358640, PubMed:29438978). Plays a role in maintaining mitochondrial homeostasis by regulating the processing of mitochondrial transcripts (PubMed:28794432). Also regulates mRNA stability by recruiting CNOT7/CAF1 deadenylase on mRNA 3'UTR leading to poly(A) tail deadenylation and thus shortening (PubMed:30520513). In response to oxidative insult, associates with stalled ribosomes localized to stress granules (SGs) and contributes to cell survival (PubMed:19765185, PubMed:23398327). Also participates in the normal skeletal muscle formation and regeneration, forming cytoplasmic myo-granules and binding mRNAs that encode sarcomeric proteins (PubMed:30464263). Plays a role in the maintenance of the circadian clock periodicity via stabilization of the CRY1 and CRY2 proteins in a FBXL3-dependent manner (PubMed:27123980). Negatively regulates the expression of CDK6 (PubMed:19760257). Regulates the expression of HDAC6, ATG7 and VCP in a PPIA/CYPA-dependent manner (PubMed:25678563).</text>
</comment>
<comment type="subunit">
    <text evidence="1 5 16 21 22 29 31 32 33 34 35 37 39">Homodimer (PubMed:20043239, PubMed:24464995). Homooligomer (via its N-terminal domain) (PubMed:28663553, PubMed:29438978). Interacts with BRDT (By similarity). Binds specifically to pyrimidine-rich motifs of TAR DNA and to single stranded TG repeated sequences. Binds to RNA, specifically to UG repeated sequences with a minimum of six contiguous repeats. Interacts with ATXN2; the interaction is RNA-dependent (PubMed:20740007). Interacts with MATR3 (PubMed:24686783). Interacts with UBQLN2 (PubMed:23541532). Interacts with HNRNPA2B1 (PubMed:19429692). Interacts with ZNF106 (By similarity). Interacts with CNOT7/CAF1 (PubMed:30520513). Interacts with CRY2 (PubMed:27123980). Interacts with PPIA/CYPA; the interaction is dependent on RNA-binding activity of TARDBP and PPIase activity of PPIA/CYPA and acetylation of PPIA/CYPA at 'Lys-125' favors the interaction (PubMed:25678563).</text>
</comment>
<comment type="interaction">
    <interactant intactId="EBI-372899">
        <id>Q13148</id>
    </interactant>
    <interactant intactId="EBI-7223971">
        <id>Q969K4</id>
        <label>ABTB1</label>
    </interactant>
    <organismsDiffer>false</organismsDiffer>
    <experiments>3</experiments>
</comment>
<comment type="interaction">
    <interactant intactId="EBI-372899">
        <id>Q13148</id>
    </interactant>
    <interactant intactId="EBI-2462104">
        <id>P55265</id>
        <label>ADAR</label>
    </interactant>
    <organismsDiffer>false</organismsDiffer>
    <experiments>3</experiments>
</comment>
<comment type="interaction">
    <interactant intactId="EBI-372899">
        <id>Q13148</id>
    </interactant>
    <interactant intactId="EBI-25840993">
        <id>Q6ZTN6-2</id>
        <label>ANKRD13D</label>
    </interactant>
    <organismsDiffer>false</organismsDiffer>
    <experiments>3</experiments>
</comment>
<comment type="interaction">
    <interactant intactId="EBI-372899">
        <id>Q13148</id>
    </interactant>
    <interactant intactId="EBI-2556915">
        <id>P13928</id>
        <label>ANXA8</label>
    </interactant>
    <organismsDiffer>false</organismsDiffer>
    <experiments>6</experiments>
</comment>
<comment type="interaction">
    <interactant intactId="EBI-372899">
        <id>Q13148</id>
    </interactant>
    <interactant intactId="EBI-11529439">
        <id>P63010-2</id>
        <label>AP2B1</label>
    </interactant>
    <organismsDiffer>false</organismsDiffer>
    <experiments>6</experiments>
</comment>
<comment type="interaction">
    <interactant intactId="EBI-372899">
        <id>Q13148</id>
    </interactant>
    <interactant intactId="EBI-77613">
        <id>P05067</id>
        <label>APP</label>
    </interactant>
    <organismsDiffer>false</organismsDiffer>
    <experiments>6</experiments>
</comment>
<comment type="interaction">
    <interactant intactId="EBI-372899">
        <id>Q13148</id>
    </interactant>
    <interactant intactId="EBI-17264467">
        <id>P05067-2</id>
        <label>APP</label>
    </interactant>
    <organismsDiffer>false</organismsDiffer>
    <experiments>3</experiments>
</comment>
<comment type="interaction">
    <interactant intactId="EBI-372899">
        <id>Q13148</id>
    </interactant>
    <interactant intactId="EBI-10186132">
        <id>Q0P5N6</id>
        <label>ARL16</label>
    </interactant>
    <organismsDiffer>false</organismsDiffer>
    <experiments>6</experiments>
</comment>
<comment type="interaction">
    <interactant intactId="EBI-372899">
        <id>Q13148</id>
    </interactant>
    <interactant intactId="EBI-707573">
        <id>Q8WXK3</id>
        <label>ASB13</label>
    </interactant>
    <organismsDiffer>false</organismsDiffer>
    <experiments>3</experiments>
</comment>
<comment type="interaction">
    <interactant intactId="EBI-372899">
        <id>Q13148</id>
    </interactant>
    <interactant intactId="EBI-14199987">
        <id>Q9Y575-3</id>
        <label>ASB3</label>
    </interactant>
    <organismsDiffer>false</organismsDiffer>
    <experiments>3</experiments>
</comment>
<comment type="interaction">
    <interactant intactId="EBI-372899">
        <id>Q13148</id>
    </interactant>
    <interactant intactId="EBI-745641">
        <id>Q96DX5</id>
        <label>ASB9</label>
    </interactant>
    <organismsDiffer>false</organismsDiffer>
    <experiments>3</experiments>
</comment>
<comment type="interaction">
    <interactant intactId="EBI-372899">
        <id>Q13148</id>
    </interactant>
    <interactant intactId="EBI-25843552">
        <id>Q96DX5-3</id>
        <label>ASB9</label>
    </interactant>
    <organismsDiffer>false</organismsDiffer>
    <experiments>3</experiments>
</comment>
<comment type="interaction">
    <interactant intactId="EBI-372899">
        <id>Q13148</id>
    </interactant>
    <interactant intactId="EBI-9089489">
        <id>Q96FT7-4</id>
        <label>ASIC4</label>
    </interactant>
    <organismsDiffer>false</organismsDiffer>
    <experiments>6</experiments>
</comment>
<comment type="interaction">
    <interactant intactId="EBI-372899">
        <id>Q13148</id>
    </interactant>
    <interactant intactId="EBI-712767">
        <id>P18847</id>
        <label>ATF3</label>
    </interactant>
    <organismsDiffer>false</organismsDiffer>
    <experiments>6</experiments>
</comment>
<comment type="interaction">
    <interactant intactId="EBI-372899">
        <id>Q13148</id>
    </interactant>
    <interactant intactId="EBI-15980880">
        <id>O95352-2</id>
        <label>ATG7</label>
    </interactant>
    <organismsDiffer>false</organismsDiffer>
    <experiments>3</experiments>
</comment>
<comment type="interaction">
    <interactant intactId="EBI-372899">
        <id>Q13148</id>
    </interactant>
    <interactant intactId="EBI-2891281">
        <id>P15313</id>
        <label>ATP6V1B1</label>
    </interactant>
    <organismsDiffer>false</organismsDiffer>
    <experiments>6</experiments>
</comment>
<comment type="interaction">
    <interactant intactId="EBI-372899">
        <id>Q13148</id>
    </interactant>
    <interactant intactId="EBI-697691">
        <id>Q99700</id>
        <label>ATXN2</label>
    </interactant>
    <organismsDiffer>false</organismsDiffer>
    <experiments>3</experiments>
</comment>
<comment type="interaction">
    <interactant intactId="EBI-372899">
        <id>Q13148</id>
    </interactant>
    <interactant intactId="EBI-10988864">
        <id>P46379-2</id>
        <label>BAG6</label>
    </interactant>
    <organismsDiffer>false</organismsDiffer>
    <experiments>6</experiments>
</comment>
<comment type="interaction">
    <interactant intactId="EBI-372899">
        <id>Q13148</id>
    </interactant>
    <interactant intactId="EBI-742750">
        <id>Q8TBE0</id>
        <label>BAHD1</label>
    </interactant>
    <organismsDiffer>false</organismsDiffer>
    <experiments>6</experiments>
</comment>
<comment type="interaction">
    <interactant intactId="EBI-372899">
        <id>Q13148</id>
    </interactant>
    <interactant intactId="EBI-10243741">
        <id>Q5H9J7</id>
        <label>BEX5</label>
    </interactant>
    <organismsDiffer>false</organismsDiffer>
    <experiments>6</experiments>
</comment>
<comment type="interaction">
    <interactant intactId="EBI-372899">
        <id>Q13148</id>
    </interactant>
    <interactant intactId="EBI-518823">
        <id>O15392</id>
        <label>BIRC5</label>
    </interactant>
    <organismsDiffer>false</organismsDiffer>
    <experiments>6</experiments>
</comment>
<comment type="interaction">
    <interactant intactId="EBI-372899">
        <id>Q13148</id>
    </interactant>
    <interactant intactId="EBI-935503">
        <id>Q9H0C5</id>
        <label>BTBD1</label>
    </interactant>
    <organismsDiffer>false</organismsDiffer>
    <experiments>3</experiments>
</comment>
<comment type="interaction">
    <interactant intactId="EBI-372899">
        <id>Q13148</id>
    </interactant>
    <interactant intactId="EBI-10697767">
        <id>Q5SZD1</id>
        <label>C6orf141</label>
    </interactant>
    <organismsDiffer>false</organismsDiffer>
    <experiments>6</experiments>
</comment>
<comment type="interaction">
    <interactant intactId="EBI-372899">
        <id>Q13148</id>
    </interactant>
    <interactant intactId="EBI-751596">
        <id>Q96LL4</id>
        <label>C8orf48</label>
    </interactant>
    <organismsDiffer>false</organismsDiffer>
    <experiments>6</experiments>
</comment>
<comment type="interaction">
    <interactant intactId="EBI-372899">
        <id>Q13148</id>
    </interactant>
    <interactant intactId="EBI-744027">
        <id>Q13191</id>
        <label>CBLB</label>
    </interactant>
    <organismsDiffer>false</organismsDiffer>
    <experiments>6</experiments>
</comment>
<comment type="interaction">
    <interactant intactId="EBI-372899">
        <id>Q13148</id>
    </interactant>
    <interactant intactId="EBI-2341018">
        <id>Q9ULV8</id>
        <label>CBLC</label>
    </interactant>
    <organismsDiffer>false</organismsDiffer>
    <experiments>3</experiments>
</comment>
<comment type="interaction">
    <interactant intactId="EBI-372899">
        <id>Q13148</id>
    </interactant>
    <interactant intactId="EBI-11974585">
        <id>Q14781-2</id>
        <label>CBX2</label>
    </interactant>
    <organismsDiffer>false</organismsDiffer>
    <experiments>6</experiments>
</comment>
<comment type="interaction">
    <interactant intactId="EBI-372899">
        <id>Q13148</id>
    </interactant>
    <interactant intactId="EBI-25879469">
        <id>Q13939</id>
        <label>CCIN</label>
    </interactant>
    <organismsDiffer>false</organismsDiffer>
    <experiments>3</experiments>
</comment>
<comment type="interaction">
    <interactant intactId="EBI-372899">
        <id>Q13148</id>
    </interactant>
    <interactant intactId="EBI-994830">
        <id>Q13042</id>
        <label>CDC16</label>
    </interactant>
    <organismsDiffer>false</organismsDiffer>
    <experiments>3</experiments>
</comment>
<comment type="interaction">
    <interactant intactId="EBI-372899">
        <id>Q13148</id>
    </interactant>
    <interactant intactId="EBI-10974085">
        <id>Q13042-2</id>
        <label>CDC16</label>
    </interactant>
    <organismsDiffer>false</organismsDiffer>
    <experiments>3</experiments>
</comment>
<comment type="interaction">
    <interactant intactId="EBI-372899">
        <id>Q13148</id>
    </interactant>
    <interactant intactId="EBI-396137">
        <id>Q9UJX2</id>
        <label>CDC23</label>
    </interactant>
    <organismsDiffer>false</organismsDiffer>
    <experiments>3</experiments>
</comment>
<comment type="interaction">
    <interactant intactId="EBI-372899">
        <id>Q13148</id>
    </interactant>
    <interactant intactId="EBI-21370617">
        <id>Q92879-3</id>
        <label>CELF1</label>
    </interactant>
    <organismsDiffer>false</organismsDiffer>
    <experiments>3</experiments>
</comment>
<comment type="interaction">
    <interactant intactId="EBI-372899">
        <id>Q13148</id>
    </interactant>
    <interactant intactId="EBI-11526150">
        <id>Q8NHQ1-3</id>
        <label>CEP70</label>
    </interactant>
    <organismsDiffer>false</organismsDiffer>
    <experiments>6</experiments>
</comment>
<comment type="interaction">
    <interactant intactId="EBI-372899">
        <id>Q13148</id>
    </interactant>
    <interactant intactId="EBI-11953200">
        <id>Q494V2-2</id>
        <label>CFAP100</label>
    </interactant>
    <organismsDiffer>false</organismsDiffer>
    <experiments>6</experiments>
</comment>
<comment type="interaction">
    <interactant intactId="EBI-372899">
        <id>Q13148</id>
    </interactant>
    <interactant intactId="EBI-1210503">
        <id>O14647</id>
        <label>CHD2</label>
    </interactant>
    <organismsDiffer>false</organismsDiffer>
    <experiments>2</experiments>
</comment>
<comment type="interaction">
    <interactant intactId="EBI-372899">
        <id>Q13148</id>
    </interactant>
    <interactant intactId="EBI-1056029">
        <id>Q16740</id>
        <label>CLPP</label>
    </interactant>
    <organismsDiffer>false</organismsDiffer>
    <experiments>3</experiments>
</comment>
<comment type="interaction">
    <interactant intactId="EBI-372899">
        <id>Q13148</id>
    </interactant>
    <interactant intactId="EBI-2872414">
        <id>Q8IUI8</id>
        <label>CRLF3</label>
    </interactant>
    <organismsDiffer>false</organismsDiffer>
    <experiments>6</experiments>
</comment>
<comment type="interaction">
    <interactant intactId="EBI-372899">
        <id>Q13148</id>
    </interactant>
    <interactant intactId="EBI-9087876">
        <id>P48730-2</id>
        <label>CSNK1D</label>
    </interactant>
    <organismsDiffer>false</organismsDiffer>
    <experiments>6</experiments>
</comment>
<comment type="interaction">
    <interactant intactId="EBI-372899">
        <id>Q13148</id>
    </interactant>
    <interactant intactId="EBI-359808">
        <id>P61962</id>
        <label>DCAF7</label>
    </interactant>
    <organismsDiffer>false</organismsDiffer>
    <experiments>3</experiments>
</comment>
<comment type="interaction">
    <interactant intactId="EBI-372899">
        <id>Q13148</id>
    </interactant>
    <interactant intactId="EBI-25842815">
        <id>Q5TAQ9-2</id>
        <label>DCAF8</label>
    </interactant>
    <organismsDiffer>false</organismsDiffer>
    <experiments>6</experiments>
</comment>
<comment type="interaction">
    <interactant intactId="EBI-372899">
        <id>Q13148</id>
    </interactant>
    <interactant intactId="EBI-25858598">
        <id>Q5TDH0-2</id>
        <label>DDI2</label>
    </interactant>
    <organismsDiffer>false</organismsDiffer>
    <experiments>3</experiments>
</comment>
<comment type="interaction">
    <interactant intactId="EBI-372899">
        <id>Q13148</id>
    </interactant>
    <interactant intactId="EBI-746012">
        <id>Q92841</id>
        <label>DDX17</label>
    </interactant>
    <organismsDiffer>false</organismsDiffer>
    <experiments>6</experiments>
</comment>
<comment type="interaction">
    <interactant intactId="EBI-372899">
        <id>Q13148</id>
    </interactant>
    <interactant intactId="EBI-353779">
        <id>O00571</id>
        <label>DDX3X</label>
    </interactant>
    <organismsDiffer>false</organismsDiffer>
    <experiments>6</experiments>
</comment>
<comment type="interaction">
    <interactant intactId="EBI-372899">
        <id>Q13148</id>
    </interactant>
    <interactant intactId="EBI-351962">
        <id>P17844</id>
        <label>DDX5</label>
    </interactant>
    <organismsDiffer>false</organismsDiffer>
    <experiments>3</experiments>
</comment>
<comment type="interaction">
    <interactant intactId="EBI-372899">
        <id>Q13148</id>
    </interactant>
    <interactant intactId="EBI-718185">
        <id>O75398</id>
        <label>DEAF1</label>
    </interactant>
    <organismsDiffer>false</organismsDiffer>
    <experiments>3</experiments>
</comment>
<comment type="interaction">
    <interactant intactId="EBI-372899">
        <id>Q13148</id>
    </interactant>
    <interactant intactId="EBI-11526226">
        <id>Q96EY1-3</id>
        <label>DNAJA3</label>
    </interactant>
    <organismsDiffer>false</organismsDiffer>
    <experiments>6</experiments>
</comment>
<comment type="interaction">
    <interactant intactId="EBI-372899">
        <id>Q13148</id>
    </interactant>
    <interactant intactId="EBI-23669343">
        <id>Q92782-2</id>
        <label>DPF1</label>
    </interactant>
    <organismsDiffer>false</organismsDiffer>
    <experiments>6</experiments>
</comment>
<comment type="interaction">
    <interactant intactId="EBI-372899">
        <id>Q13148</id>
    </interactant>
    <interactant intactId="EBI-21529239">
        <id>Q86TI2-2</id>
        <label>DPP9</label>
    </interactant>
    <organismsDiffer>false</organismsDiffer>
    <experiments>6</experiments>
</comment>
<comment type="interaction">
    <interactant intactId="EBI-372899">
        <id>Q13148</id>
    </interactant>
    <interactant intactId="EBI-11132357">
        <id>O75530-2</id>
        <label>EED</label>
    </interactant>
    <organismsDiffer>false</organismsDiffer>
    <experiments>3</experiments>
</comment>
<comment type="interaction">
    <interactant intactId="EBI-372899">
        <id>Q13148</id>
    </interactant>
    <interactant intactId="EBI-711990">
        <id>O00303</id>
        <label>EIF3F</label>
    </interactant>
    <organismsDiffer>false</organismsDiffer>
    <experiments>6</experiments>
</comment>
<comment type="interaction">
    <interactant intactId="EBI-372899">
        <id>Q13148</id>
    </interactant>
    <interactant intactId="EBI-374260">
        <id>Q15717</id>
        <label>ELAVL1</label>
    </interactant>
    <organismsDiffer>false</organismsDiffer>
    <experiments>7</experiments>
</comment>
<comment type="interaction">
    <interactant intactId="EBI-372899">
        <id>Q13148</id>
    </interactant>
    <interactant intactId="EBI-9246952">
        <id>Q8TC29</id>
        <label>ENKUR</label>
    </interactant>
    <organismsDiffer>false</organismsDiffer>
    <experiments>6</experiments>
</comment>
<comment type="interaction">
    <interactant intactId="EBI-372899">
        <id>Q13148</id>
    </interactant>
    <interactant intactId="EBI-25838727">
        <id>P29323-3</id>
        <label>EPHB2</label>
    </interactant>
    <organismsDiffer>false</organismsDiffer>
    <experiments>6</experiments>
</comment>
<comment type="interaction">
    <interactant intactId="EBI-372899">
        <id>Q13148</id>
    </interactant>
    <interactant intactId="EBI-10213520">
        <id>Q6NXG1</id>
        <label>ESRP1</label>
    </interactant>
    <organismsDiffer>false</organismsDiffer>
    <experiments>6</experiments>
</comment>
<comment type="interaction">
    <interactant intactId="EBI-372899">
        <id>Q13148</id>
    </interactant>
    <interactant intactId="EBI-949824">
        <id>O00471</id>
        <label>EXOC5</label>
    </interactant>
    <organismsDiffer>false</organismsDiffer>
    <experiments>6</experiments>
</comment>
<comment type="interaction">
    <interactant intactId="EBI-372899">
        <id>Q13148</id>
    </interactant>
    <interactant intactId="EBI-3893327">
        <id>Q6P1L5</id>
        <label>FAM117B</label>
    </interactant>
    <organismsDiffer>false</organismsDiffer>
    <experiments>6</experiments>
</comment>
<comment type="interaction">
    <interactant intactId="EBI-372899">
        <id>Q13148</id>
    </interactant>
    <interactant intactId="EBI-5461838">
        <id>Q17RN3</id>
        <label>FAM98C</label>
    </interactant>
    <organismsDiffer>false</organismsDiffer>
    <experiments>6</experiments>
</comment>
<comment type="interaction">
    <interactant intactId="EBI-372899">
        <id>Q13148</id>
    </interactant>
    <interactant intactId="EBI-8468186">
        <id>Q8IZU1</id>
        <label>FAM9A</label>
    </interactant>
    <organismsDiffer>false</organismsDiffer>
    <experiments>6</experiments>
</comment>
<comment type="interaction">
    <interactant intactId="EBI-372899">
        <id>Q13148</id>
    </interactant>
    <interactant intactId="EBI-2692340">
        <id>Q9UKA1</id>
        <label>FBXL5</label>
    </interactant>
    <organismsDiffer>false</organismsDiffer>
    <experiments>3</experiments>
</comment>
<comment type="interaction">
    <interactant intactId="EBI-372899">
        <id>Q13148</id>
    </interactant>
    <interactant intactId="EBI-960409">
        <id>Q9UKT5</id>
        <label>FBXO4</label>
    </interactant>
    <organismsDiffer>false</organismsDiffer>
    <experiments>3</experiments>
</comment>
<comment type="interaction">
    <interactant intactId="EBI-372899">
        <id>Q13148</id>
    </interactant>
    <interactant intactId="EBI-400434">
        <id>P35637</id>
        <label>FUS</label>
    </interactant>
    <organismsDiffer>false</organismsDiffer>
    <experiments>9</experiments>
</comment>
<comment type="interaction">
    <interactant intactId="EBI-372899">
        <id>Q13148</id>
    </interactant>
    <interactant intactId="EBI-618189">
        <id>Q06547-2</id>
        <label>GABPB1</label>
    </interactant>
    <organismsDiffer>false</organismsDiffer>
    <experiments>6</experiments>
</comment>
<comment type="interaction">
    <interactant intactId="EBI-372899">
        <id>Q13148</id>
    </interactant>
    <interactant intactId="EBI-750953">
        <id>Q96IJ6</id>
        <label>GMPPA</label>
    </interactant>
    <organismsDiffer>false</organismsDiffer>
    <experiments>6</experiments>
</comment>
<comment type="interaction">
    <interactant intactId="EBI-372899">
        <id>Q13148</id>
    </interactant>
    <interactant intactId="EBI-356942">
        <id>P62879</id>
        <label>GNB2</label>
    </interactant>
    <organismsDiffer>false</organismsDiffer>
    <experiments>7</experiments>
</comment>
<comment type="interaction">
    <interactant intactId="EBI-372899">
        <id>Q13148</id>
    </interactant>
    <interactant intactId="EBI-347538">
        <id>Q9Y4H4</id>
        <label>GPSM3</label>
    </interactant>
    <organismsDiffer>false</organismsDiffer>
    <experiments>6</experiments>
</comment>
<comment type="interaction">
    <interactant intactId="EBI-372899">
        <id>Q13148</id>
    </interactant>
    <interactant intactId="EBI-740290">
        <id>Q969Y2</id>
        <label>GTPBP3</label>
    </interactant>
    <organismsDiffer>false</organismsDiffer>
    <experiments>6</experiments>
</comment>
<comment type="interaction">
    <interactant intactId="EBI-372899">
        <id>Q13148</id>
    </interactant>
    <interactant intactId="EBI-301697">
        <id>Q9UBN7</id>
        <label>HDAC6</label>
    </interactant>
    <organismsDiffer>false</organismsDiffer>
    <experiments>3</experiments>
</comment>
<comment type="interaction">
    <interactant intactId="EBI-372899">
        <id>Q13148</id>
    </interactant>
    <interactant intactId="EBI-2680288">
        <id>Q9HCC6</id>
        <label>HES4</label>
    </interactant>
    <organismsDiffer>false</organismsDiffer>
    <experiments>6</experiments>
</comment>
<comment type="interaction">
    <interactant intactId="EBI-372899">
        <id>Q13148</id>
    </interactant>
    <interactant intactId="EBI-357966">
        <id>P07910</id>
        <label>HNRNPC</label>
    </interactant>
    <organismsDiffer>false</organismsDiffer>
    <experiments>3</experiments>
</comment>
<comment type="interaction">
    <interactant intactId="EBI-372899">
        <id>Q13148</id>
    </interactant>
    <interactant intactId="EBI-5280084">
        <id>P07910-2</id>
        <label>HNRNPC</label>
    </interactant>
    <organismsDiffer>false</organismsDiffer>
    <experiments>6</experiments>
</comment>
<comment type="interaction">
    <interactant intactId="EBI-372899">
        <id>Q13148</id>
    </interactant>
    <interactant intactId="EBI-299727">
        <id>O14979</id>
        <label>HNRNPDL</label>
    </interactant>
    <organismsDiffer>false</organismsDiffer>
    <experiments>3</experiments>
</comment>
<comment type="interaction">
    <interactant intactId="EBI-372899">
        <id>Q13148</id>
    </interactant>
    <interactant intactId="EBI-351590">
        <id>P31943</id>
        <label>HNRNPH1</label>
    </interactant>
    <organismsDiffer>false</organismsDiffer>
    <experiments>7</experiments>
</comment>
<comment type="interaction">
    <interactant intactId="EBI-372899">
        <id>Q13148</id>
    </interactant>
    <interactant intactId="EBI-304185">
        <id>P61978</id>
        <label>HNRNPK</label>
    </interactant>
    <organismsDiffer>false</organismsDiffer>
    <experiments>3</experiments>
</comment>
<comment type="interaction">
    <interactant intactId="EBI-372899">
        <id>Q13148</id>
    </interactant>
    <interactant intactId="EBI-7060731">
        <id>P61978-2</id>
        <label>HNRNPK</label>
    </interactant>
    <organismsDiffer>false</organismsDiffer>
    <experiments>6</experiments>
</comment>
<comment type="interaction">
    <interactant intactId="EBI-372899">
        <id>Q13148</id>
    </interactant>
    <interactant intactId="EBI-12236340">
        <id>O43390-2</id>
        <label>HNRNPR</label>
    </interactant>
    <organismsDiffer>false</organismsDiffer>
    <experiments>3</experiments>
</comment>
<comment type="interaction">
    <interactant intactId="EBI-372899">
        <id>Q13148</id>
    </interactant>
    <interactant intactId="EBI-351143">
        <id>Q00839-2</id>
        <label>HNRNPU</label>
    </interactant>
    <organismsDiffer>false</organismsDiffer>
    <experiments>6</experiments>
</comment>
<comment type="interaction">
    <interactant intactId="EBI-372899">
        <id>Q13148</id>
    </interactant>
    <interactant intactId="EBI-1018153">
        <id>Q9BUJ2</id>
        <label>HNRNPUL1</label>
    </interactant>
    <organismsDiffer>false</organismsDiffer>
    <experiments>3</experiments>
</comment>
<comment type="interaction">
    <interactant intactId="EBI-372899">
        <id>Q13148</id>
    </interactant>
    <interactant intactId="EBI-11018029">
        <id>Q9BUJ2-2</id>
        <label>HNRNPUL1</label>
    </interactant>
    <organismsDiffer>false</organismsDiffer>
    <experiments>3</experiments>
</comment>
<comment type="interaction">
    <interactant intactId="EBI-372899">
        <id>Q13148</id>
    </interactant>
    <interactant intactId="EBI-10298318">
        <id>Q9BTB7</id>
        <label>HNRPUL1</label>
    </interactant>
    <organismsDiffer>false</organismsDiffer>
    <experiments>3</experiments>
</comment>
<comment type="interaction">
    <interactant intactId="EBI-372899">
        <id>Q13148</id>
    </interactant>
    <interactant intactId="EBI-713450">
        <id>Q02363</id>
        <label>ID2</label>
    </interactant>
    <organismsDiffer>false</organismsDiffer>
    <experiments>6</experiments>
</comment>
<comment type="interaction">
    <interactant intactId="EBI-372899">
        <id>Q13148</id>
    </interactant>
    <interactant intactId="EBI-12823003">
        <id>P80217-2</id>
        <label>IFI35</label>
    </interactant>
    <organismsDiffer>false</organismsDiffer>
    <experiments>6</experiments>
</comment>
<comment type="interaction">
    <interactant intactId="EBI-372899">
        <id>Q13148</id>
    </interactant>
    <interactant intactId="EBI-1024419">
        <id>Q9Y6M1</id>
        <label>IGF2BP2</label>
    </interactant>
    <organismsDiffer>false</organismsDiffer>
    <experiments>3</experiments>
</comment>
<comment type="interaction">
    <interactant intactId="EBI-372899">
        <id>Q13148</id>
    </interactant>
    <interactant intactId="EBI-1058566">
        <id>O00425</id>
        <label>IGF2BP3</label>
    </interactant>
    <organismsDiffer>false</organismsDiffer>
    <experiments>6</experiments>
</comment>
<comment type="interaction">
    <interactant intactId="EBI-372899">
        <id>Q13148</id>
    </interactant>
    <interactant intactId="EBI-12904528">
        <id>Q12906-6</id>
        <label>ILF3</label>
    </interactant>
    <organismsDiffer>false</organismsDiffer>
    <experiments>6</experiments>
</comment>
<comment type="interaction">
    <interactant intactId="EBI-372899">
        <id>Q13148</id>
    </interactant>
    <interactant intactId="EBI-743980">
        <id>Q9NXX0</id>
        <label>ILF3</label>
    </interactant>
    <organismsDiffer>false</organismsDiffer>
    <experiments>3</experiments>
</comment>
<comment type="interaction">
    <interactant intactId="EBI-372899">
        <id>Q13148</id>
    </interactant>
    <interactant intactId="EBI-21911304">
        <id>Q6DN90-2</id>
        <label>IQSEC1</label>
    </interactant>
    <organismsDiffer>false</organismsDiffer>
    <experiments>6</experiments>
</comment>
<comment type="interaction">
    <interactant intactId="EBI-372899">
        <id>Q13148</id>
    </interactant>
    <interactant intactId="EBI-447733">
        <id>O43187</id>
        <label>IRAK2</label>
    </interactant>
    <organismsDiffer>false</organismsDiffer>
    <experiments>2</experiments>
</comment>
<comment type="interaction">
    <interactant intactId="EBI-372899">
        <id>Q13148</id>
    </interactant>
    <interactant intactId="EBI-10278909">
        <id>Q92613</id>
        <label>JADE3</label>
    </interactant>
    <organismsDiffer>false</organismsDiffer>
    <experiments>6</experiments>
</comment>
<comment type="interaction">
    <interactant intactId="EBI-372899">
        <id>Q13148</id>
    </interactant>
    <interactant intactId="EBI-25871195">
        <id>Q9NVX7-2</id>
        <label>KBTBD4</label>
    </interactant>
    <organismsDiffer>false</organismsDiffer>
    <experiments>6</experiments>
</comment>
<comment type="interaction">
    <interactant intactId="EBI-372899">
        <id>Q13148</id>
    </interactant>
    <interactant intactId="EBI-12382297">
        <id>Q96SI1-2</id>
        <label>KCTD15</label>
    </interactant>
    <organismsDiffer>false</organismsDiffer>
    <experiments>6</experiments>
</comment>
<comment type="interaction">
    <interactant intactId="EBI-372899">
        <id>Q13148</id>
    </interactant>
    <interactant intactId="EBI-743960">
        <id>Q8N5Z5</id>
        <label>KCTD17</label>
    </interactant>
    <organismsDiffer>false</organismsDiffer>
    <experiments>6</experiments>
</comment>
<comment type="interaction">
    <interactant intactId="EBI-372899">
        <id>Q13148</id>
    </interactant>
    <interactant intactId="EBI-2796400">
        <id>Q9UIH9</id>
        <label>KLF15</label>
    </interactant>
    <organismsDiffer>false</organismsDiffer>
    <experiments>6</experiments>
</comment>
<comment type="interaction">
    <interactant intactId="EBI-372899">
        <id>Q13148</id>
    </interactant>
    <interactant intactId="EBI-21328926">
        <id>Q6TDP4</id>
        <label>KLHL17</label>
    </interactant>
    <organismsDiffer>false</organismsDiffer>
    <experiments>3</experiments>
</comment>
<comment type="interaction">
    <interactant intactId="EBI-372899">
        <id>Q13148</id>
    </interactant>
    <interactant intactId="EBI-714379">
        <id>Q9Y2M5</id>
        <label>KLHL20</label>
    </interactant>
    <organismsDiffer>false</organismsDiffer>
    <experiments>3</experiments>
</comment>
<comment type="interaction">
    <interactant intactId="EBI-372899">
        <id>Q13148</id>
    </interactant>
    <interactant intactId="EBI-1996072">
        <id>Q53GT1</id>
        <label>KLHL22</label>
    </interactant>
    <organismsDiffer>false</organismsDiffer>
    <experiments>4</experiments>
</comment>
<comment type="interaction">
    <interactant intactId="EBI-372899">
        <id>Q13148</id>
    </interactant>
    <interactant intactId="EBI-724915">
        <id>Q53HC5</id>
        <label>KLHL26</label>
    </interactant>
    <organismsDiffer>false</organismsDiffer>
    <experiments>3</experiments>
</comment>
<comment type="interaction">
    <interactant intactId="EBI-372899">
        <id>Q13148</id>
    </interactant>
    <interactant intactId="EBI-6426390">
        <id>Q96NJ5</id>
        <label>KLHL32</label>
    </interactant>
    <organismsDiffer>false</organismsDiffer>
    <experiments>3</experiments>
</comment>
<comment type="interaction">
    <interactant intactId="EBI-372899">
        <id>Q13148</id>
    </interactant>
    <interactant intactId="EBI-10973851">
        <id>Q8N4N3-2</id>
        <label>KLHL36</label>
    </interactant>
    <organismsDiffer>false</organismsDiffer>
    <experiments>6</experiments>
</comment>
<comment type="interaction">
    <interactant intactId="EBI-372899">
        <id>Q13148</id>
    </interactant>
    <interactant intactId="EBI-396343">
        <id>O00629</id>
        <label>KPNA4</label>
    </interactant>
    <organismsDiffer>false</organismsDiffer>
    <experiments>3</experiments>
</comment>
<comment type="interaction">
    <interactant intactId="EBI-372899">
        <id>Q13148</id>
    </interactant>
    <interactant intactId="EBI-1044640">
        <id>Q9BYQ4</id>
        <label>KRTAP9-2</label>
    </interactant>
    <organismsDiffer>false</organismsDiffer>
    <experiments>6</experiments>
</comment>
<comment type="interaction">
    <interactant intactId="EBI-372899">
        <id>Q13148</id>
    </interactant>
    <interactant intactId="EBI-11985629">
        <id>Q96JM7-2</id>
        <label>L3MBTL3</label>
    </interactant>
    <organismsDiffer>false</organismsDiffer>
    <experiments>6</experiments>
</comment>
<comment type="interaction">
    <interactant intactId="EBI-372899">
        <id>Q13148</id>
    </interactant>
    <interactant intactId="EBI-1108377">
        <id>Q9BYZ2</id>
        <label>LDHAL6B</label>
    </interactant>
    <organismsDiffer>false</organismsDiffer>
    <experiments>6</experiments>
</comment>
<comment type="interaction">
    <interactant intactId="EBI-372899">
        <id>Q13148</id>
    </interactant>
    <interactant intactId="EBI-9088829">
        <id>Q6DKI2</id>
        <label>LGALS9C</label>
    </interactant>
    <organismsDiffer>false</organismsDiffer>
    <experiments>6</experiments>
</comment>
<comment type="interaction">
    <interactant intactId="EBI-372899">
        <id>Q13148</id>
    </interactant>
    <interactant intactId="EBI-739832">
        <id>Q8TBB1</id>
        <label>LNX1</label>
    </interactant>
    <organismsDiffer>false</organismsDiffer>
    <experiments>3</experiments>
</comment>
<comment type="interaction">
    <interactant intactId="EBI-372899">
        <id>Q13148</id>
    </interactant>
    <interactant intactId="EBI-2340947">
        <id>Q8N448</id>
        <label>LNX2</label>
    </interactant>
    <organismsDiffer>false</organismsDiffer>
    <experiments>6</experiments>
</comment>
<comment type="interaction">
    <interactant intactId="EBI-372899">
        <id>Q13148</id>
    </interactant>
    <interactant intactId="EBI-2510853">
        <id>Q1L5Z9</id>
        <label>LONRF2</label>
    </interactant>
    <organismsDiffer>false</organismsDiffer>
    <experiments>3</experiments>
</comment>
<comment type="interaction">
    <interactant intactId="EBI-372899">
        <id>Q13148</id>
    </interactant>
    <interactant intactId="EBI-347779">
        <id>O95777</id>
        <label>LSM8</label>
    </interactant>
    <organismsDiffer>false</organismsDiffer>
    <experiments>6</experiments>
</comment>
<comment type="interaction">
    <interactant intactId="EBI-372899">
        <id>Q13148</id>
    </interactant>
    <interactant intactId="EBI-10694180">
        <id>Q8TD91-2</id>
        <label>MAGEC3</label>
    </interactant>
    <organismsDiffer>false</organismsDiffer>
    <experiments>6</experiments>
</comment>
<comment type="interaction">
    <interactant intactId="EBI-372899">
        <id>Q13148</id>
    </interactant>
    <interactant intactId="EBI-298304">
        <id>Q15759</id>
        <label>MAPK11</label>
    </interactant>
    <organismsDiffer>false</organismsDiffer>
    <experiments>6</experiments>
</comment>
<comment type="interaction">
    <interactant intactId="EBI-372899">
        <id>Q13148</id>
    </interactant>
    <interactant intactId="EBI-352602">
        <id>P43243</id>
        <label>MATR3</label>
    </interactant>
    <organismsDiffer>false</organismsDiffer>
    <experiments>6</experiments>
</comment>
<comment type="interaction">
    <interactant intactId="EBI-372899">
        <id>Q13148</id>
    </interactant>
    <interactant intactId="EBI-13288755">
        <id>A0JLT2-2</id>
        <label>MED19</label>
    </interactant>
    <organismsDiffer>false</organismsDiffer>
    <experiments>3</experiments>
</comment>
<comment type="interaction">
    <interactant intactId="EBI-372899">
        <id>Q13148</id>
    </interactant>
    <interactant intactId="EBI-8487781">
        <id>Q8N6F8</id>
        <label>METTL27</label>
    </interactant>
    <organismsDiffer>false</organismsDiffer>
    <experiments>6</experiments>
</comment>
<comment type="interaction">
    <interactant intactId="EBI-372899">
        <id>Q13148</id>
    </interactant>
    <interactant intactId="EBI-4397720">
        <id>Q8TDB4</id>
        <label>MGARP</label>
    </interactant>
    <organismsDiffer>false</organismsDiffer>
    <experiments>6</experiments>
</comment>
<comment type="interaction">
    <interactant intactId="EBI-372899">
        <id>Q13148</id>
    </interactant>
    <interactant intactId="EBI-25830642">
        <id>Q8N108-16</id>
        <label>MIER1</label>
    </interactant>
    <organismsDiffer>false</organismsDiffer>
    <experiments>6</experiments>
</comment>
<comment type="interaction">
    <interactant intactId="EBI-372899">
        <id>Q13148</id>
    </interactant>
    <interactant intactId="EBI-21250407">
        <id>A4FUJ8</id>
        <label>MKL1</label>
    </interactant>
    <organismsDiffer>false</organismsDiffer>
    <experiments>6</experiments>
</comment>
<comment type="interaction">
    <interactant intactId="EBI-372899">
        <id>Q13148</id>
    </interactant>
    <interactant intactId="EBI-2341005">
        <id>Q9H000</id>
        <label>MKRN2</label>
    </interactant>
    <organismsDiffer>false</organismsDiffer>
    <experiments>6</experiments>
</comment>
<comment type="interaction">
    <interactant intactId="EBI-372899">
        <id>Q13148</id>
    </interactant>
    <interactant intactId="EBI-2340269">
        <id>Q13064</id>
        <label>MKRN3</label>
    </interactant>
    <organismsDiffer>false</organismsDiffer>
    <experiments>3</experiments>
</comment>
<comment type="interaction">
    <interactant intactId="EBI-372899">
        <id>Q13148</id>
    </interactant>
    <interactant intactId="EBI-8475277">
        <id>Q15049</id>
        <label>MLC1</label>
    </interactant>
    <organismsDiffer>false</organismsDiffer>
    <experiments>6</experiments>
</comment>
<comment type="interaction">
    <interactant intactId="EBI-372899">
        <id>Q13148</id>
    </interactant>
    <interactant intactId="EBI-716139">
        <id>P51948</id>
        <label>MNAT1</label>
    </interactant>
    <organismsDiffer>false</organismsDiffer>
    <experiments>3</experiments>
</comment>
<comment type="interaction">
    <interactant intactId="EBI-372899">
        <id>Q13148</id>
    </interactant>
    <interactant intactId="EBI-373206">
        <id>O95396</id>
        <label>MOCS3</label>
    </interactant>
    <organismsDiffer>false</organismsDiffer>
    <experiments>3</experiments>
</comment>
<comment type="interaction">
    <interactant intactId="EBI-372899">
        <id>Q13148</id>
    </interactant>
    <interactant intactId="EBI-2512452">
        <id>Q8N594</id>
        <label>MPND</label>
    </interactant>
    <organismsDiffer>false</organismsDiffer>
    <experiments>6</experiments>
</comment>
<comment type="interaction">
    <interactant intactId="EBI-372899">
        <id>Q13148</id>
    </interactant>
    <interactant intactId="EBI-10698053">
        <id>Q9Y483-4</id>
        <label>MTF2</label>
    </interactant>
    <organismsDiffer>false</organismsDiffer>
    <experiments>3</experiments>
</comment>
<comment type="interaction">
    <interactant intactId="EBI-372899">
        <id>Q13148</id>
    </interactant>
    <interactant intactId="EBI-447544">
        <id>P01106</id>
        <label>MYC</label>
    </interactant>
    <organismsDiffer>false</organismsDiffer>
    <experiments>6</experiments>
</comment>
<comment type="interaction">
    <interactant intactId="EBI-372899">
        <id>Q13148</id>
    </interactant>
    <interactant intactId="EBI-744871">
        <id>O00746</id>
        <label>NME4</label>
    </interactant>
    <organismsDiffer>false</organismsDiffer>
    <experiments>6</experiments>
</comment>
<comment type="interaction">
    <interactant intactId="EBI-372899">
        <id>Q13148</id>
    </interactant>
    <interactant intactId="EBI-721577">
        <id>Q9UNZ2</id>
        <label>NSFL1C</label>
    </interactant>
    <organismsDiffer>false</organismsDiffer>
    <experiments>4</experiments>
</comment>
<comment type="interaction">
    <interactant intactId="EBI-372899">
        <id>Q13148</id>
    </interactant>
    <interactant intactId="EBI-1059321">
        <id>Q8NFH3</id>
        <label>NUP43</label>
    </interactant>
    <organismsDiffer>false</organismsDiffer>
    <experiments>3</experiments>
</comment>
<comment type="interaction">
    <interactant intactId="EBI-372899">
        <id>Q13148</id>
    </interactant>
    <interactant intactId="EBI-18577082">
        <id>O15381-5</id>
        <label>NVL</label>
    </interactant>
    <organismsDiffer>false</organismsDiffer>
    <experiments>6</experiments>
</comment>
<comment type="interaction">
    <interactant intactId="EBI-372899">
        <id>Q13148</id>
    </interactant>
    <interactant intactId="EBI-1058491">
        <id>Q96FW1</id>
        <label>OTUB1</label>
    </interactant>
    <organismsDiffer>false</organismsDiffer>
    <experiments>8</experiments>
</comment>
<comment type="interaction">
    <interactant intactId="EBI-372899">
        <id>Q13148</id>
    </interactant>
    <interactant intactId="EBI-25830200">
        <id>Q6GQQ9-2</id>
        <label>OTUD7B</label>
    </interactant>
    <organismsDiffer>false</organismsDiffer>
    <experiments>6</experiments>
</comment>
<comment type="interaction">
    <interactant intactId="EBI-372899">
        <id>Q13148</id>
    </interactant>
    <interactant intactId="EBI-740446">
        <id>P32242</id>
        <label>OTX1</label>
    </interactant>
    <organismsDiffer>false</organismsDiffer>
    <experiments>6</experiments>
</comment>
<comment type="interaction">
    <interactant intactId="EBI-372899">
        <id>Q13148</id>
    </interactant>
    <interactant intactId="EBI-2555014">
        <id>Q6VY07</id>
        <label>PACS1</label>
    </interactant>
    <organismsDiffer>false</organismsDiffer>
    <experiments>6</experiments>
</comment>
<comment type="interaction">
    <interactant intactId="EBI-372899">
        <id>Q13148</id>
    </interactant>
    <interactant intactId="EBI-17159452">
        <id>Q9NR21-5</id>
        <label>PARP11</label>
    </interactant>
    <organismsDiffer>false</organismsDiffer>
    <experiments>3</experiments>
</comment>
<comment type="interaction">
    <interactant intactId="EBI-372899">
        <id>Q13148</id>
    </interactant>
    <interactant intactId="EBI-11022007">
        <id>Q9HBE1-4</id>
        <label>PATZ1</label>
    </interactant>
    <organismsDiffer>false</organismsDiffer>
    <experiments>3</experiments>
</comment>
<comment type="interaction">
    <interactant intactId="EBI-372899">
        <id>Q13148</id>
    </interactant>
    <interactant intactId="EBI-10302990">
        <id>Q9BYU1</id>
        <label>PBX4</label>
    </interactant>
    <organismsDiffer>false</organismsDiffer>
    <experiments>6</experiments>
</comment>
<comment type="interaction">
    <interactant intactId="EBI-372899">
        <id>Q13148</id>
    </interactant>
    <interactant intactId="EBI-6309018">
        <id>Q9NV79</id>
        <label>PCMTD2</label>
    </interactant>
    <organismsDiffer>false</organismsDiffer>
    <experiments>3</experiments>
</comment>
<comment type="interaction">
    <interactant intactId="EBI-372899">
        <id>Q13148</id>
    </interactant>
    <interactant intactId="EBI-25984441">
        <id>Q6ZMN7-2</id>
        <label>PDZRN4</label>
    </interactant>
    <organismsDiffer>false</organismsDiffer>
    <experiments>3</experiments>
</comment>
<comment type="interaction">
    <interactant intactId="EBI-372899">
        <id>Q13148</id>
    </interactant>
    <interactant intactId="EBI-10196507">
        <id>P09565</id>
        <label>PP9974</label>
    </interactant>
    <organismsDiffer>false</organismsDiffer>
    <experiments>6</experiments>
</comment>
<comment type="interaction">
    <interactant intactId="EBI-372899">
        <id>Q13148</id>
    </interactant>
    <interactant intactId="EBI-714746">
        <id>O75807</id>
        <label>PPP1R15A</label>
    </interactant>
    <organismsDiffer>false</organismsDiffer>
    <experiments>10</experiments>
</comment>
<comment type="interaction">
    <interactant intactId="EBI-372899">
        <id>Q13148</id>
    </interactant>
    <interactant intactId="EBI-25835994">
        <id>Q6ZMI0-5</id>
        <label>PPP1R21</label>
    </interactant>
    <organismsDiffer>false</organismsDiffer>
    <experiments>6</experiments>
</comment>
<comment type="interaction">
    <interactant intactId="EBI-372899">
        <id>Q13148</id>
    </interactant>
    <interactant intactId="EBI-21251460">
        <id>O60260-5</id>
        <label>PRKN</label>
    </interactant>
    <organismsDiffer>false</organismsDiffer>
    <experiments>3</experiments>
</comment>
<comment type="interaction">
    <interactant intactId="EBI-372899">
        <id>Q13148</id>
    </interactant>
    <interactant intactId="EBI-538479">
        <id>Q6P2Q9</id>
        <label>PRPF8</label>
    </interactant>
    <organismsDiffer>false</organismsDiffer>
    <experiments>3</experiments>
</comment>
<comment type="interaction">
    <interactant intactId="EBI-372899">
        <id>Q13148</id>
    </interactant>
    <interactant intactId="EBI-749195">
        <id>P60891</id>
        <label>PRPS1</label>
    </interactant>
    <organismsDiffer>false</organismsDiffer>
    <experiments>6</experiments>
</comment>
<comment type="interaction">
    <interactant intactId="EBI-372899">
        <id>Q13148</id>
    </interactant>
    <interactant intactId="EBI-603350">
        <id>P28070</id>
        <label>PSMB4</label>
    </interactant>
    <organismsDiffer>false</organismsDiffer>
    <experiments>3</experiments>
</comment>
<comment type="interaction">
    <interactant intactId="EBI-372899">
        <id>Q13148</id>
    </interactant>
    <interactant intactId="EBI-372312">
        <id>P28062-2</id>
        <label>PSMB8</label>
    </interactant>
    <organismsDiffer>false</organismsDiffer>
    <experiments>6</experiments>
</comment>
<comment type="interaction">
    <interactant intactId="EBI-372899">
        <id>Q13148</id>
    </interactant>
    <interactant intactId="EBI-357648">
        <id>Q13200</id>
        <label>PSMD2</label>
    </interactant>
    <organismsDiffer>false</organismsDiffer>
    <experiments>3</experiments>
</comment>
<comment type="interaction">
    <interactant intactId="EBI-372899">
        <id>Q13148</id>
    </interactant>
    <interactant intactId="EBI-16437588">
        <id>P26599-3</id>
        <label>PTBP1</label>
    </interactant>
    <organismsDiffer>false</organismsDiffer>
    <experiments>3</experiments>
</comment>
<comment type="interaction">
    <interactant intactId="EBI-372899">
        <id>Q13148</id>
    </interactant>
    <interactant intactId="EBI-2339393">
        <id>Q9NS91</id>
        <label>RAD18</label>
    </interactant>
    <organismsDiffer>false</organismsDiffer>
    <experiments>3</experiments>
</comment>
<comment type="interaction">
    <interactant intactId="EBI-372899">
        <id>Q13148</id>
    </interactant>
    <interactant intactId="EBI-620823">
        <id>Q09028</id>
        <label>RBBP4</label>
    </interactant>
    <organismsDiffer>false</organismsDiffer>
    <experiments>6</experiments>
</comment>
<comment type="interaction">
    <interactant intactId="EBI-372899">
        <id>Q13148</id>
    </interactant>
    <interactant intactId="EBI-2340624">
        <id>Q9BYM8</id>
        <label>RBCK1</label>
    </interactant>
    <organismsDiffer>false</organismsDiffer>
    <experiments>3</experiments>
</comment>
<comment type="interaction">
    <interactant intactId="EBI-372899">
        <id>Q13148</id>
    </interactant>
    <interactant intactId="EBI-721525">
        <id>P98175</id>
        <label>RBM10</label>
    </interactant>
    <organismsDiffer>false</organismsDiffer>
    <experiments>3</experiments>
</comment>
<comment type="interaction">
    <interactant intactId="EBI-372899">
        <id>Q13148</id>
    </interactant>
    <interactant intactId="EBI-12068216">
        <id>Q8TBY0</id>
        <label>RBM46</label>
    </interactant>
    <organismsDiffer>false</organismsDiffer>
    <experiments>3</experiments>
</comment>
<comment type="interaction">
    <interactant intactId="EBI-372899">
        <id>Q13148</id>
    </interactant>
    <interactant intactId="EBI-743526">
        <id>P38159</id>
        <label>RBMX</label>
    </interactant>
    <organismsDiffer>false</organismsDiffer>
    <experiments>3</experiments>
</comment>
<comment type="interaction">
    <interactant intactId="EBI-372899">
        <id>Q13148</id>
    </interactant>
    <interactant intactId="EBI-73886">
        <id>Q04206</id>
        <label>RELA</label>
    </interactant>
    <organismsDiffer>false</organismsDiffer>
    <experiments>3</experiments>
</comment>
<comment type="interaction">
    <interactant intactId="EBI-372899">
        <id>Q13148</id>
    </interactant>
    <interactant intactId="EBI-2797992">
        <id>Q9H871</id>
        <label>RMND5A</label>
    </interactant>
    <organismsDiffer>false</organismsDiffer>
    <experiments>3</experiments>
</comment>
<comment type="interaction">
    <interactant intactId="EBI-372899">
        <id>Q13148</id>
    </interactant>
    <interactant intactId="EBI-745055">
        <id>Q96G75</id>
        <label>RMND5B</label>
    </interactant>
    <organismsDiffer>false</organismsDiffer>
    <experiments>3</experiments>
</comment>
<comment type="interaction">
    <interactant intactId="EBI-372899">
        <id>Q13148</id>
    </interactant>
    <interactant intactId="EBI-714023">
        <id>Q8N5U6</id>
        <label>RNF10</label>
    </interactant>
    <organismsDiffer>false</organismsDiffer>
    <experiments>3</experiments>
</comment>
<comment type="interaction">
    <interactant intactId="EBI-372899">
        <id>Q13148</id>
    </interactant>
    <interactant intactId="EBI-25829984">
        <id>Q9ULX5</id>
        <label>RNF112</label>
    </interactant>
    <organismsDiffer>false</organismsDiffer>
    <experiments>6</experiments>
</comment>
<comment type="interaction">
    <interactant intactId="EBI-372899">
        <id>Q13148</id>
    </interactant>
    <interactant intactId="EBI-749039">
        <id>Q8WVD3</id>
        <label>RNF138</label>
    </interactant>
    <organismsDiffer>false</organismsDiffer>
    <experiments>3</experiments>
</comment>
<comment type="interaction">
    <interactant intactId="EBI-372899">
        <id>Q13148</id>
    </interactant>
    <interactant intactId="EBI-2130308">
        <id>Q9UBS8</id>
        <label>RNF14</label>
    </interactant>
    <organismsDiffer>false</organismsDiffer>
    <experiments>3</experiments>
</comment>
<comment type="interaction">
    <interactant intactId="EBI-372899">
        <id>Q13148</id>
    </interactant>
    <interactant intactId="EBI-2130320">
        <id>Q96A37</id>
        <label>RNF166</label>
    </interactant>
    <organismsDiffer>false</organismsDiffer>
    <experiments>3</experiments>
</comment>
<comment type="interaction">
    <interactant intactId="EBI-372899">
        <id>Q13148</id>
    </interactant>
    <interactant intactId="EBI-743938">
        <id>Q96D59</id>
        <label>RNF183</label>
    </interactant>
    <organismsDiffer>false</organismsDiffer>
    <experiments>3</experiments>
</comment>
<comment type="interaction">
    <interactant intactId="EBI-372899">
        <id>Q13148</id>
    </interactant>
    <interactant intactId="EBI-752324">
        <id>Q8N488</id>
        <label>RYBP</label>
    </interactant>
    <organismsDiffer>false</organismsDiffer>
    <experiments>6</experiments>
</comment>
<comment type="interaction">
    <interactant intactId="EBI-372899">
        <id>Q13148</id>
    </interactant>
    <interactant intactId="EBI-346977">
        <id>Q15393</id>
        <label>SF3B3</label>
    </interactant>
    <organismsDiffer>false</organismsDiffer>
    <experiments>6</experiments>
</comment>
<comment type="interaction">
    <interactant intactId="EBI-372899">
        <id>Q13148</id>
    </interactant>
    <interactant intactId="EBI-11522811">
        <id>Q8IUQ4-2</id>
        <label>SIAH1</label>
    </interactant>
    <organismsDiffer>false</organismsDiffer>
    <experiments>3</experiments>
</comment>
<comment type="interaction">
    <interactant intactId="EBI-372899">
        <id>Q13148</id>
    </interactant>
    <interactant intactId="EBI-358545">
        <id>Q9GZS3</id>
        <label>SKIC8</label>
    </interactant>
    <organismsDiffer>false</organismsDiffer>
    <experiments>6</experiments>
</comment>
<comment type="interaction">
    <interactant intactId="EBI-372899">
        <id>Q13148</id>
    </interactant>
    <interactant intactId="EBI-21504521">
        <id>Q8NCS7</id>
        <label>SLC44A5</label>
    </interactant>
    <organismsDiffer>false</organismsDiffer>
    <experiments>6</experiments>
</comment>
<comment type="interaction">
    <interactant intactId="EBI-372899">
        <id>Q13148</id>
    </interactant>
    <interactant intactId="EBI-358489">
        <id>Q96GM5</id>
        <label>SMARCD1</label>
    </interactant>
    <organismsDiffer>false</organismsDiffer>
    <experiments>6</experiments>
</comment>
<comment type="interaction">
    <interactant intactId="EBI-372899">
        <id>Q13148</id>
    </interactant>
    <interactant intactId="EBI-9845742">
        <id>Q9HCE7-2</id>
        <label>SMURF1</label>
    </interactant>
    <organismsDiffer>false</organismsDiffer>
    <experiments>3</experiments>
</comment>
<comment type="interaction">
    <interactant intactId="EBI-372899">
        <id>Q13148</id>
    </interactant>
    <interactant intactId="EBI-3929549">
        <id>O14544</id>
        <label>SOCS6</label>
    </interactant>
    <organismsDiffer>false</organismsDiffer>
    <experiments>3</experiments>
</comment>
<comment type="interaction">
    <interactant intactId="EBI-372899">
        <id>Q13148</id>
    </interactant>
    <interactant intactId="EBI-11959123">
        <id>Q99932-2</id>
        <label>SPAG8</label>
    </interactant>
    <organismsDiffer>false</organismsDiffer>
    <experiments>6</experiments>
</comment>
<comment type="interaction">
    <interactant intactId="EBI-372899">
        <id>Q13148</id>
    </interactant>
    <interactant intactId="EBI-7067260">
        <id>Q8NHS9</id>
        <label>SPATA22</label>
    </interactant>
    <organismsDiffer>false</organismsDiffer>
    <experiments>6</experiments>
</comment>
<comment type="interaction">
    <interactant intactId="EBI-372899">
        <id>Q13148</id>
    </interactant>
    <interactant intactId="EBI-2659201">
        <id>Q96BD6</id>
        <label>SPSB1</label>
    </interactant>
    <organismsDiffer>false</organismsDiffer>
    <experiments>3</experiments>
</comment>
<comment type="interaction">
    <interactant intactId="EBI-372899">
        <id>Q13148</id>
    </interactant>
    <interactant intactId="EBI-396676">
        <id>O95630</id>
        <label>STAMBP</label>
    </interactant>
    <organismsDiffer>false</organismsDiffer>
    <experiments>3</experiments>
</comment>
<comment type="interaction">
    <interactant intactId="EBI-372899">
        <id>Q13148</id>
    </interactant>
    <interactant intactId="EBI-21560407">
        <id>Q92797-2</id>
        <label>SYMPK</label>
    </interactant>
    <organismsDiffer>false</organismsDiffer>
    <experiments>6</experiments>
</comment>
<comment type="interaction">
    <interactant intactId="EBI-372899">
        <id>Q13148</id>
    </interactant>
    <interactant intactId="EBI-11123832">
        <id>O60506-4</id>
        <label>SYNCRIP</label>
    </interactant>
    <organismsDiffer>false</organismsDiffer>
    <experiments>6</experiments>
</comment>
<comment type="interaction">
    <interactant intactId="EBI-372899">
        <id>Q13148</id>
    </interactant>
    <interactant intactId="EBI-372899">
        <id>Q13148</id>
        <label>TARDBP</label>
    </interactant>
    <organismsDiffer>false</organismsDiffer>
    <experiments>31</experiments>
</comment>
<comment type="interaction">
    <interactant intactId="EBI-372899">
        <id>Q13148</id>
    </interactant>
    <interactant intactId="EBI-745958">
        <id>Q5VWN6</id>
        <label>TASOR2</label>
    </interactant>
    <organismsDiffer>false</organismsDiffer>
    <experiments>6</experiments>
</comment>
<comment type="interaction">
    <interactant intactId="EBI-372899">
        <id>Q13148</id>
    </interactant>
    <interactant intactId="EBI-6427217">
        <id>Q9Y458</id>
        <label>TBX22</label>
    </interactant>
    <organismsDiffer>false</organismsDiffer>
    <experiments>6</experiments>
</comment>
<comment type="interaction">
    <interactant intactId="EBI-372899">
        <id>Q13148</id>
    </interactant>
    <interactant intactId="EBI-25840535">
        <id>Q15554-4</id>
        <label>TERF2</label>
    </interactant>
    <organismsDiffer>false</organismsDiffer>
    <experiments>6</experiments>
</comment>
<comment type="interaction">
    <interactant intactId="EBI-372899">
        <id>Q13148</id>
    </interactant>
    <interactant intactId="EBI-17438286">
        <id>Q8WTV1</id>
        <label>THAP3</label>
    </interactant>
    <organismsDiffer>false</organismsDiffer>
    <experiments>6</experiments>
</comment>
<comment type="interaction">
    <interactant intactId="EBI-372899">
        <id>Q13148</id>
    </interactant>
    <interactant intactId="EBI-25985089">
        <id>Q92956-2</id>
        <label>TNFRSF14</label>
    </interactant>
    <organismsDiffer>false</organismsDiffer>
    <experiments>6</experiments>
</comment>
<comment type="interaction">
    <interactant intactId="EBI-372899">
        <id>Q13148</id>
    </interactant>
    <interactant intactId="EBI-723281">
        <id>P50616</id>
        <label>TOB1</label>
    </interactant>
    <organismsDiffer>false</organismsDiffer>
    <experiments>4</experiments>
</comment>
<comment type="interaction">
    <interactant intactId="EBI-372899">
        <id>Q13148</id>
    </interactant>
    <interactant intactId="EBI-740098">
        <id>P36406</id>
        <label>TRIM23</label>
    </interactant>
    <organismsDiffer>false</organismsDiffer>
    <experiments>3</experiments>
</comment>
<comment type="interaction">
    <interactant intactId="EBI-372899">
        <id>Q13148</id>
    </interactant>
    <interactant intactId="EBI-11993364">
        <id>Q9H8W5-2</id>
        <label>TRIM45</label>
    </interactant>
    <organismsDiffer>false</organismsDiffer>
    <experiments>3</experiments>
</comment>
<comment type="interaction">
    <interactant intactId="EBI-372899">
        <id>Q13148</id>
    </interactant>
    <interactant intactId="EBI-25843781">
        <id>L8E9Q5</id>
        <label>TRIM65</label>
    </interactant>
    <organismsDiffer>false</organismsDiffer>
    <experiments>3</experiments>
</comment>
<comment type="interaction">
    <interactant intactId="EBI-372899">
        <id>Q13148</id>
    </interactant>
    <interactant intactId="EBI-11525489">
        <id>Q86WT6-2</id>
        <label>TRIM69</label>
    </interactant>
    <organismsDiffer>false</organismsDiffer>
    <experiments>3</experiments>
</comment>
<comment type="interaction">
    <interactant intactId="EBI-372899">
        <id>Q13148</id>
    </interactant>
    <interactant intactId="EBI-10259086">
        <id>Q86UV6-2</id>
        <label>TRIM74</label>
    </interactant>
    <organismsDiffer>false</organismsDiffer>
    <experiments>3</experiments>
</comment>
<comment type="interaction">
    <interactant intactId="EBI-372899">
        <id>Q13148</id>
    </interactant>
    <interactant intactId="EBI-2340370">
        <id>Q9BZR9</id>
        <label>TRIM8</label>
    </interactant>
    <organismsDiffer>false</organismsDiffer>
    <experiments>3</experiments>
</comment>
<comment type="interaction">
    <interactant intactId="EBI-372899">
        <id>Q13148</id>
    </interactant>
    <interactant intactId="EBI-720828">
        <id>Q9C026</id>
        <label>TRIM9</label>
    </interactant>
    <organismsDiffer>false</organismsDiffer>
    <experiments>6</experiments>
</comment>
<comment type="interaction">
    <interactant intactId="EBI-372899">
        <id>Q13148</id>
    </interactant>
    <interactant intactId="EBI-751921">
        <id>P41226</id>
        <label>UBA7</label>
    </interactant>
    <organismsDiffer>false</organismsDiffer>
    <experiments>3</experiments>
</comment>
<comment type="interaction">
    <interactant intactId="EBI-372899">
        <id>Q13148</id>
    </interactant>
    <interactant intactId="EBI-1050671">
        <id>Q13404</id>
        <label>UBE2V1</label>
    </interactant>
    <organismsDiffer>false</organismsDiffer>
    <experiments>3</experiments>
</comment>
<comment type="interaction">
    <interactant intactId="EBI-372899">
        <id>Q13148</id>
    </interactant>
    <interactant intactId="EBI-751901">
        <id>O94941</id>
        <label>UBOX5</label>
    </interactant>
    <organismsDiffer>false</organismsDiffer>
    <experiments>3</experiments>
</comment>
<comment type="interaction">
    <interactant intactId="EBI-372899">
        <id>Q13148</id>
    </interactant>
    <interactant intactId="EBI-12295223">
        <id>Q8IYU4</id>
        <label>UBQLNL</label>
    </interactant>
    <organismsDiffer>false</organismsDiffer>
    <experiments>3</experiments>
</comment>
<comment type="interaction">
    <interactant intactId="EBI-372899">
        <id>Q13148</id>
    </interactant>
    <interactant intactId="EBI-714351">
        <id>Q92995</id>
        <label>USP13</label>
    </interactant>
    <organismsDiffer>false</organismsDiffer>
    <experiments>3</experiments>
</comment>
<comment type="interaction">
    <interactant intactId="EBI-372899">
        <id>Q13148</id>
    </interactant>
    <interactant intactId="EBI-10696113">
        <id>O75604-3</id>
        <label>USP2</label>
    </interactant>
    <organismsDiffer>false</organismsDiffer>
    <experiments>6</experiments>
</comment>
<comment type="interaction">
    <interactant intactId="EBI-372899">
        <id>Q13148</id>
    </interactant>
    <interactant intactId="EBI-2512161">
        <id>Q86UV5</id>
        <label>USP48</label>
    </interactant>
    <organismsDiffer>false</organismsDiffer>
    <experiments>3</experiments>
</comment>
<comment type="interaction">
    <interactant intactId="EBI-372899">
        <id>Q13148</id>
    </interactant>
    <interactant intactId="EBI-12157263">
        <id>P40337-2</id>
        <label>VHL</label>
    </interactant>
    <organismsDiffer>false</organismsDiffer>
    <experiments>3</experiments>
</comment>
<comment type="interaction">
    <interactant intactId="EBI-372899">
        <id>Q13148</id>
    </interactant>
    <interactant intactId="EBI-2850578">
        <id>Q8NEZ2</id>
        <label>VPS37A</label>
    </interactant>
    <organismsDiffer>false</organismsDiffer>
    <experiments>3</experiments>
</comment>
<comment type="interaction">
    <interactant intactId="EBI-372899">
        <id>Q13148</id>
    </interactant>
    <interactant intactId="EBI-10270911">
        <id>Q8NEZ2-2</id>
        <label>VPS37A</label>
    </interactant>
    <organismsDiffer>false</organismsDiffer>
    <experiments>3</experiments>
</comment>
<comment type="interaction">
    <interactant intactId="EBI-372899">
        <id>Q13148</id>
    </interactant>
    <interactant intactId="EBI-6427899">
        <id>P58304</id>
        <label>VSX2</label>
    </interactant>
    <organismsDiffer>false</organismsDiffer>
    <experiments>6</experiments>
</comment>
<comment type="interaction">
    <interactant intactId="EBI-372899">
        <id>Q13148</id>
    </interactant>
    <interactant intactId="EBI-2490660">
        <id>Q9GZL7</id>
        <label>WDR12</label>
    </interactant>
    <organismsDiffer>false</organismsDiffer>
    <experiments>3</experiments>
</comment>
<comment type="interaction">
    <interactant intactId="EBI-372899">
        <id>Q13148</id>
    </interactant>
    <interactant intactId="EBI-7705033">
        <id>Q9BRX9</id>
        <label>WDR83</label>
    </interactant>
    <organismsDiffer>false</organismsDiffer>
    <experiments>6</experiments>
</comment>
<comment type="interaction">
    <interactant intactId="EBI-372899">
        <id>Q13148</id>
    </interactant>
    <interactant intactId="EBI-743923">
        <id>O00308</id>
        <label>WWP2</label>
    </interactant>
    <organismsDiffer>false</organismsDiffer>
    <experiments>3</experiments>
</comment>
<comment type="interaction">
    <interactant intactId="EBI-372899">
        <id>Q13148</id>
    </interactant>
    <interactant intactId="EBI-372110">
        <id>Q9H0D6</id>
        <label>XRN2</label>
    </interactant>
    <organismsDiffer>false</organismsDiffer>
    <experiments>7</experiments>
</comment>
<comment type="interaction">
    <interactant intactId="EBI-372899">
        <id>Q13148</id>
    </interactant>
    <interactant intactId="EBI-354065">
        <id>P67809</id>
        <label>YBX1</label>
    </interactant>
    <organismsDiffer>false</organismsDiffer>
    <experiments>6</experiments>
</comment>
<comment type="interaction">
    <interactant intactId="EBI-372899">
        <id>Q13148</id>
    </interactant>
    <interactant intactId="EBI-25842419">
        <id>O43167-2</id>
        <label>ZBTB24</label>
    </interactant>
    <organismsDiffer>false</organismsDiffer>
    <experiments>3</experiments>
</comment>
<comment type="interaction">
    <interactant intactId="EBI-372899">
        <id>Q13148</id>
    </interactant>
    <interactant intactId="EBI-739899">
        <id>P24278</id>
        <label>ZBTB25</label>
    </interactant>
    <organismsDiffer>false</organismsDiffer>
    <experiments>3</experiments>
</comment>
<comment type="interaction">
    <interactant intactId="EBI-372899">
        <id>Q13148</id>
    </interactant>
    <interactant intactId="EBI-2813661">
        <id>Q8N895</id>
        <label>ZNF366</label>
    </interactant>
    <organismsDiffer>false</organismsDiffer>
    <experiments>4</experiments>
</comment>
<comment type="interaction">
    <interactant intactId="EBI-372899">
        <id>Q13148</id>
    </interactant>
    <interactant intactId="EBI-745520">
        <id>Q9P0T4</id>
        <label>ZNF581</label>
    </interactant>
    <organismsDiffer>false</organismsDiffer>
    <experiments>6</experiments>
</comment>
<comment type="interaction">
    <interactant intactId="EBI-372899">
        <id>Q13148</id>
    </interactant>
    <interactant intactId="EBI-12021938">
        <id>Q8NBB4-2</id>
        <label>ZSCAN1</label>
    </interactant>
    <organismsDiffer>false</organismsDiffer>
    <experiments>6</experiments>
</comment>
<comment type="interaction">
    <interactant intactId="EBI-372899">
        <id>Q13148</id>
    </interactant>
    <interactant intactId="EBI-10211777">
        <id>A0A384ME25</id>
    </interactant>
    <organismsDiffer>false</organismsDiffer>
    <experiments>6</experiments>
</comment>
<comment type="interaction">
    <interactant intactId="EBI-372899">
        <id>Q13148</id>
    </interactant>
    <interactant intactId="EBI-10307430">
        <id>Q9H669</id>
    </interactant>
    <organismsDiffer>false</organismsDiffer>
    <experiments>6</experiments>
</comment>
<comment type="interaction">
    <interactant intactId="EBI-372899">
        <id>Q13148</id>
    </interactant>
    <interactant intactId="EBI-710918">
        <id>Q9WMX2</id>
    </interactant>
    <organismsDiffer>true</organismsDiffer>
    <experiments>2</experiments>
</comment>
<comment type="subcellular location">
    <subcellularLocation>
        <location evidence="6 7 13 20 33 35 37">Nucleus</location>
    </subcellularLocation>
    <subcellularLocation>
        <location evidence="13 27 38">Cytoplasm</location>
    </subcellularLocation>
    <subcellularLocation>
        <location evidence="20 27">Cytoplasm</location>
        <location evidence="20 27">Stress granule</location>
    </subcellularLocation>
    <subcellularLocation>
        <location evidence="36 40">Mitochondrion</location>
    </subcellularLocation>
    <text evidence="13 20 36">Continuously travels in and out of the nucleus (PubMed:18957508). Localizes to stress granules in response to oxidative stress (PubMed:19765185). A small subset localizes in mitochondria (PubMed:28794432).</text>
</comment>
<comment type="alternative products">
    <event type="alternative splicing"/>
    <isoform>
        <id>Q13148-1</id>
        <name>1</name>
        <sequence type="displayed"/>
    </isoform>
    <isoform>
        <id>Q13148-4</id>
        <name>2</name>
        <sequence type="described" ref="VSP_056406 VSP_056407"/>
    </isoform>
</comment>
<comment type="tissue specificity">
    <text>Ubiquitously expressed. In particular, expression is high in pancreas, placenta, lung, genital tract and spleen.</text>
</comment>
<comment type="domain">
    <text>Consists of an N-terminal domain (NTD) and two tandem RNA recognition motifs, RRM1 and RRM2, followed by a C-terminal glycine-rich region.</text>
</comment>
<comment type="domain">
    <text evidence="13">Contains a nuclear localization sequence and is mostly nuclear; however, its nuclear export sequence permits it to transport mRNAs to the cytoplasm and even to synapses as part of neuronal granules.</text>
</comment>
<comment type="PTM">
    <text evidence="27">Hyperphosphorylated in hippocampus, neocortex, and spinal cord from individuals affected with ALS and FTLDU. Phosphorylated upon cellular stress.</text>
</comment>
<comment type="PTM">
    <text evidence="6 7">Ubiquitinated in hippocampus, neocortex, and spinal cord from individuals affected with ALS and FTLDU.</text>
</comment>
<comment type="PTM">
    <text>Cleaved to generate C-terminal fragments in hippocampus, neocortex, and spinal cord from individuals affected with ALS and FTLDU.</text>
</comment>
<comment type="disease" evidence="8 9 10 11 12 14 15 17 18 19 22 23 25 26 33 40">
    <disease id="DI-00114">
        <name>Amyotrophic lateral sclerosis 10</name>
        <acronym>ALS10</acronym>
        <description>A neurodegenerative disorder affecting upper motor neurons in the brain and lower motor neurons in the brain stem and spinal cord, resulting in fatal paralysis. Sensory abnormalities are absent. The pathologic hallmarks of the disease include pallor of the corticospinal tract due to loss of motor neurons, presence of ubiquitin-positive inclusions within surviving motor neurons, and deposition of pathologic aggregates. The etiology of amyotrophic lateral sclerosis is likely to be multifactorial, involving both genetic and environmental factors. The disease is inherited in 5-10% of the cases.</description>
        <dbReference type="MIM" id="612069"/>
    </disease>
    <text evidence="40">The disease is caused by variants affecting the gene represented in this entry. Neurodegeneration is caused by activation of the cGAS-STING pathway: defects in TARDBP trigger mitochondrial DNA release into the cytosol via the permeability transition pore (PubMed:33031745). Released mitochondrial DNA is then detected by CGAS, leading to activation of the cGAS-STING pathway, triggering type-I interferon production and autoinflammation (PubMed:33031745).</text>
</comment>
<comment type="sequence caution" evidence="44">
    <conflict type="miscellaneous discrepancy">
        <sequence resource="EMBL-CDS" id="ABO32290"/>
    </conflict>
    <text>Probable cloning artifact.</text>
</comment>
<comment type="sequence caution" evidence="44">
    <conflict type="miscellaneous discrepancy">
        <sequence resource="EMBL-CDS" id="ABO32292"/>
    </conflict>
    <text>Probable cloning artifact.</text>
</comment>
<proteinExistence type="evidence at protein level"/>
<feature type="chain" id="PRO_0000081972" description="TAR DNA-binding protein 43">
    <location>
        <begin position="1"/>
        <end position="414"/>
    </location>
</feature>
<feature type="domain" description="RRM 1" evidence="2">
    <location>
        <begin position="104"/>
        <end position="200"/>
    </location>
</feature>
<feature type="domain" description="RRM 2" evidence="2">
    <location>
        <begin position="191"/>
        <end position="262"/>
    </location>
</feature>
<feature type="region of interest" description="Interaction with UBQLN2" evidence="29">
    <location>
        <begin position="216"/>
        <end position="414"/>
    </location>
</feature>
<feature type="region of interest" description="Disordered" evidence="3">
    <location>
        <begin position="261"/>
        <end position="303"/>
    </location>
</feature>
<feature type="region of interest" description="Disordered" evidence="3">
    <location>
        <begin position="341"/>
        <end position="373"/>
    </location>
</feature>
<feature type="short sequence motif" description="Nuclear localization signal" evidence="13">
    <location>
        <begin position="82"/>
        <end position="98"/>
    </location>
</feature>
<feature type="short sequence motif" description="Nuclear export signal" evidence="13">
    <location>
        <begin position="239"/>
        <end position="250"/>
    </location>
</feature>
<feature type="compositionally biased region" description="Basic and acidic residues" evidence="3">
    <location>
        <begin position="261"/>
        <end position="274"/>
    </location>
</feature>
<feature type="compositionally biased region" description="Gly residues" evidence="3">
    <location>
        <begin position="275"/>
        <end position="303"/>
    </location>
</feature>
<feature type="compositionally biased region" description="Low complexity" evidence="3">
    <location>
        <begin position="342"/>
        <end position="358"/>
    </location>
</feature>
<feature type="modified residue" description="Phosphoserine" evidence="47">
    <location>
        <position position="183"/>
    </location>
</feature>
<feature type="modified residue" description="Phosphoserine" evidence="46 47 49">
    <location>
        <position position="292"/>
    </location>
</feature>
<feature type="modified residue" description="Omega-N-methylarginine" evidence="48">
    <location>
        <position position="293"/>
    </location>
</feature>
<feature type="cross-link" description="Glycyl lysine isopeptide (Lys-Gly) (interchain with G-Cter in SUMO2)" evidence="52">
    <location>
        <position position="79"/>
    </location>
</feature>
<feature type="cross-link" description="Glycyl lysine isopeptide (Lys-Gly) (interchain with G-Cter in SUMO2)" evidence="52">
    <location>
        <position position="84"/>
    </location>
</feature>
<feature type="cross-link" description="Glycyl lysine isopeptide (Lys-Gly) (interchain with G-Cter in SUMO2)" evidence="52">
    <location>
        <position position="95"/>
    </location>
</feature>
<feature type="cross-link" description="Glycyl lysine isopeptide (Lys-Gly) (interchain with G-Cter in SUMO2)" evidence="51">
    <location>
        <position position="102"/>
    </location>
</feature>
<feature type="cross-link" description="Glycyl lysine isopeptide (Lys-Gly) (interchain with G-Cter in SUMO2)" evidence="50 51 52">
    <location>
        <position position="181"/>
    </location>
</feature>
<feature type="cross-link" description="Glycyl lysine isopeptide (Lys-Gly) (interchain with G-Cter in SUMO2)" evidence="52">
    <location>
        <position position="263"/>
    </location>
</feature>
<feature type="splice variant" id="VSP_056406" description="In isoform 2." evidence="41">
    <original>MSEYIRVTEDENDEPIEI</original>
    <variation>MPQMLAGEIWCMLSTIQK</variation>
    <location>
        <begin position="1"/>
        <end position="18"/>
    </location>
</feature>
<feature type="splice variant" id="VSP_056407" description="In isoform 2." evidence="41">
    <location>
        <begin position="19"/>
        <end position="134"/>
    </location>
</feature>
<feature type="sequence variant" id="VAR_045656" description="In dbSNP:rs80356715." evidence="9 10 19 26">
    <original>A</original>
    <variation>V</variation>
    <location>
        <position position="90"/>
    </location>
</feature>
<feature type="sequence variant" id="VAR_045657" description="In ALS10; dbSNP:rs80356717." evidence="10">
    <original>D</original>
    <variation>G</variation>
    <location>
        <position position="169"/>
    </location>
</feature>
<feature type="sequence variant" id="VAR_058611" description="In ALS10; also in a patient with frontotemporal dementia; dbSNP:rs80356718." evidence="14">
    <original>N</original>
    <variation>S</variation>
    <location>
        <position position="267"/>
    </location>
</feature>
<feature type="sequence variant" id="VAR_045658" description="In ALS10; loss of ability to negatively regulate the expression of CDK6; dbSNP:rs80356719." evidence="10 14 19">
    <original>G</original>
    <variation>S</variation>
    <location>
        <position position="287"/>
    </location>
</feature>
<feature type="sequence variant" id="VAR_045659" description="In ALS10; dbSNP:rs121908395." evidence="11">
    <original>G</original>
    <variation>A</variation>
    <location>
        <position position="290"/>
    </location>
</feature>
<feature type="sequence variant" id="VAR_045660" description="In ALS10; dbSNP:rs80356721." evidence="9 18">
    <original>G</original>
    <variation>A</variation>
    <location>
        <position position="294"/>
    </location>
</feature>
<feature type="sequence variant" id="VAR_058612" description="In ALS10; a patient with bulbar signs and dementia; dbSNP:rs80356721." evidence="14">
    <original>G</original>
    <variation>V</variation>
    <location>
        <position position="294"/>
    </location>
</feature>
<feature type="sequence variant" id="VAR_058613" description="In ALS10; dbSNP:rs80356723." evidence="14">
    <original>G</original>
    <variation>R</variation>
    <location>
        <position position="295"/>
    </location>
</feature>
<feature type="sequence variant" id="VAR_058614" description="In ALS10; also in patients with frontotemporal lobar degeneration with motor neuron disease; dbSNP:rs80356723." evidence="14">
    <original>G</original>
    <variation>S</variation>
    <location>
        <position position="295"/>
    </location>
</feature>
<feature type="sequence variant" id="VAR_045661" description="In ALS10; dbSNP:rs4884357." evidence="11">
    <original>G</original>
    <variation>S</variation>
    <location>
        <position position="298"/>
    </location>
</feature>
<feature type="sequence variant" id="VAR_045662" description="In ALS10; triggers mitochondrial DNA release into the cytosol, which is then detected by CGAS, leading to activation of the cGAS-STING pathway and autoinflammation; slight reduction in interaction with PPIA/CYPA; dbSNP:rs80356726." evidence="8 10 33 40">
    <original>A</original>
    <variation>T</variation>
    <location>
        <position position="315"/>
    </location>
</feature>
<feature type="sequence variant" id="VAR_083737" description="In ALS10; loss of ability to negatively regulate the expression of CDK6." evidence="19">
    <original>A</original>
    <variation>V</variation>
    <location>
        <position position="321"/>
    </location>
</feature>
<feature type="sequence variant" id="VAR_045663" description="In ALS10; triggers mitochondrial DNA release into the cytosol, which is then detected by CGAS, leading to activation of the cGAS-STING pathway and autoinflammation; impedes the development of normal limb and tail buds and increases the number of apoptotic nuclei when expressed in chick embryos; does not affect the interaction with ATXN2; dbSNP:rs80356727." evidence="9 22 40">
    <original>Q</original>
    <variation>K</variation>
    <location>
        <position position="331"/>
    </location>
</feature>
<feature type="sequence variant" id="VAR_058615" description="In ALS10; dbSNP:rs80356728." evidence="14">
    <original>S</original>
    <variation>N</variation>
    <location>
        <position position="332"/>
    </location>
</feature>
<feature type="sequence variant" id="VAR_058616" description="In ALS10; dbSNP:rs80356729." evidence="14">
    <original>G</original>
    <variation>D</variation>
    <location>
        <position position="335"/>
    </location>
</feature>
<feature type="sequence variant" id="VAR_045664" description="In ALS10; impedes the development of normal limb and tail buds and increases the number of apoptotic nuclei when expressed in chick embryos; loss of ability to negatively regulate the expression of CDK6; dbSNP:rs80356730." evidence="9 14 19">
    <original>M</original>
    <variation>V</variation>
    <location>
        <position position="337"/>
    </location>
</feature>
<feature type="sequence variant" id="VAR_062767" description="In ALS10; dbSNP:rs80356731." evidence="12">
    <original>Q</original>
    <variation>R</variation>
    <location>
        <position position="343"/>
    </location>
</feature>
<feature type="sequence variant" id="VAR_045665" description="In ALS10; dbSNP:rs80356733." evidence="10">
    <original>G</original>
    <variation>C</variation>
    <location>
        <position position="348"/>
    </location>
</feature>
<feature type="sequence variant" id="VAR_083738" description="In ALS10; loss of interaction with PPIA/CYPA." evidence="19 33">
    <original>G</original>
    <variation>V</variation>
    <location>
        <position position="348"/>
    </location>
</feature>
<feature type="sequence variant" id="VAR_067499" description="In ALS10." evidence="26">
    <original>G</original>
    <variation>R</variation>
    <location>
        <position position="357"/>
    </location>
</feature>
<feature type="sequence variant" id="VAR_045666" description="In ALS10; significant reduction in interaction with PPIA/CYPA; dbSNP:rs80356735." evidence="10 33">
    <original>R</original>
    <variation>S</variation>
    <location>
        <position position="361"/>
    </location>
</feature>
<feature type="sequence variant" id="VAR_067500" description="In ALS10." evidence="26">
    <original>R</original>
    <variation>T</variation>
    <location>
        <position position="361"/>
    </location>
</feature>
<feature type="sequence variant" id="VAR_058617" description="In ALS10; dbSNP:rs80356739." evidence="14">
    <original>S</original>
    <variation>C</variation>
    <location>
        <position position="379"/>
    </location>
</feature>
<feature type="sequence variant" id="VAR_058618" description="In ALS10; dbSNP:rs80356738." evidence="14 26">
    <original>S</original>
    <variation>P</variation>
    <location>
        <position position="379"/>
    </location>
</feature>
<feature type="sequence variant" id="VAR_045667" description="In ALS10; dbSNP:rs367543041." evidence="10 14 23 25">
    <original>A</original>
    <variation>T</variation>
    <location>
        <position position="382"/>
    </location>
</feature>
<feature type="sequence variant" id="VAR_045668" description="In ALS10; dbSNP:rs80356741." evidence="10">
    <original>N</original>
    <variation>D</variation>
    <location>
        <position position="390"/>
    </location>
</feature>
<feature type="sequence variant" id="VAR_045669" description="In ALS10; dbSNP:rs80356742." evidence="10">
    <original>N</original>
    <variation>S</variation>
    <location>
        <position position="390"/>
    </location>
</feature>
<feature type="sequence variant" id="VAR_058619" description="In ALS10; dbSNP:rs80356743." evidence="14">
    <original>S</original>
    <variation>L</variation>
    <location>
        <position position="393"/>
    </location>
</feature>
<feature type="mutagenesis site" description="Complete loss of self-oligomerization." evidence="37">
    <original>S</original>
    <variation>E</variation>
    <location>
        <position position="48"/>
    </location>
</feature>
<feature type="mutagenesis site" description="Loss of RNA-binding and reduced interaction with PPIA/CYPA." evidence="33">
    <location>
        <begin position="103"/>
        <end position="183"/>
    </location>
</feature>
<feature type="mutagenesis site" description="Completely abolishes RNA binding." evidence="5">
    <location>
        <begin position="106"/>
        <end position="175"/>
    </location>
</feature>
<feature type="mutagenesis site" description="Completely abolishes RNA binding." evidence="5">
    <original>LIVLGL</original>
    <variation>DIDLGD</variation>
    <location>
        <begin position="106"/>
        <end position="111"/>
    </location>
</feature>
<feature type="mutagenesis site" description="Completely abolishes RNA binding." evidence="5">
    <location>
        <begin position="106"/>
        <end position="111"/>
    </location>
</feature>
<feature type="mutagenesis site" description="Highly reduces binding to RNA and DNA." evidence="5">
    <original>FGF</original>
    <variation>LGL</variation>
    <location>
        <begin position="147"/>
        <end position="149"/>
    </location>
</feature>
<feature type="mutagenesis site" description="Alters but does not abolish RNA binding." evidence="5">
    <location>
        <begin position="193"/>
        <end position="257"/>
    </location>
</feature>
<feature type="sequence conflict" description="In Ref. 5; BAD96474." evidence="44" ref="5">
    <original>E</original>
    <variation>G</variation>
    <location>
        <position position="200"/>
    </location>
</feature>
<feature type="sequence conflict" description="In Ref. 3; BAG35326." evidence="44" ref="3">
    <original>G</original>
    <variation>V</variation>
    <location>
        <position position="278"/>
    </location>
</feature>
<feature type="strand" evidence="58">
    <location>
        <begin position="4"/>
        <end position="10"/>
    </location>
</feature>
<feature type="strand" evidence="58">
    <location>
        <begin position="16"/>
        <end position="19"/>
    </location>
</feature>
<feature type="strand" evidence="55">
    <location>
        <begin position="22"/>
        <end position="24"/>
    </location>
</feature>
<feature type="strand" evidence="59">
    <location>
        <begin position="25"/>
        <end position="27"/>
    </location>
</feature>
<feature type="helix" evidence="58">
    <location>
        <begin position="28"/>
        <end position="32"/>
    </location>
</feature>
<feature type="strand" evidence="59">
    <location>
        <begin position="33"/>
        <end position="37"/>
    </location>
</feature>
<feature type="strand" evidence="58">
    <location>
        <begin position="40"/>
        <end position="44"/>
    </location>
</feature>
<feature type="turn" evidence="58">
    <location>
        <begin position="46"/>
        <end position="48"/>
    </location>
</feature>
<feature type="strand" evidence="58">
    <location>
        <begin position="50"/>
        <end position="53"/>
    </location>
</feature>
<feature type="strand" evidence="58">
    <location>
        <begin position="55"/>
        <end position="57"/>
    </location>
</feature>
<feature type="strand" evidence="58">
    <location>
        <begin position="60"/>
        <end position="62"/>
    </location>
</feature>
<feature type="strand" evidence="59">
    <location>
        <begin position="65"/>
        <end position="67"/>
    </location>
</feature>
<feature type="turn" evidence="60">
    <location>
        <begin position="69"/>
        <end position="71"/>
    </location>
</feature>
<feature type="strand" evidence="58">
    <location>
        <begin position="72"/>
        <end position="76"/>
    </location>
</feature>
<feature type="strand" evidence="63">
    <location>
        <begin position="87"/>
        <end position="89"/>
    </location>
</feature>
<feature type="strand" evidence="57">
    <location>
        <begin position="106"/>
        <end position="110"/>
    </location>
</feature>
<feature type="helix" evidence="57">
    <location>
        <begin position="117"/>
        <end position="124"/>
    </location>
</feature>
<feature type="turn" evidence="57">
    <location>
        <begin position="125"/>
        <end position="127"/>
    </location>
</feature>
<feature type="strand" evidence="57">
    <location>
        <begin position="130"/>
        <end position="137"/>
    </location>
</feature>
<feature type="turn" evidence="57">
    <location>
        <begin position="139"/>
        <end position="141"/>
    </location>
</feature>
<feature type="strand" evidence="57">
    <location>
        <begin position="144"/>
        <end position="154"/>
    </location>
</feature>
<feature type="helix" evidence="57">
    <location>
        <begin position="155"/>
        <end position="162"/>
    </location>
</feature>
<feature type="strand" evidence="57">
    <location>
        <begin position="166"/>
        <end position="168"/>
    </location>
</feature>
<feature type="strand" evidence="57">
    <location>
        <begin position="171"/>
        <end position="176"/>
    </location>
</feature>
<feature type="strand" evidence="53">
    <location>
        <begin position="193"/>
        <end position="197"/>
    </location>
</feature>
<feature type="strand" evidence="53">
    <location>
        <begin position="200"/>
        <end position="202"/>
    </location>
</feature>
<feature type="helix" evidence="53">
    <location>
        <begin position="204"/>
        <end position="210"/>
    </location>
</feature>
<feature type="turn" evidence="53">
    <location>
        <begin position="212"/>
        <end position="214"/>
    </location>
</feature>
<feature type="strand" evidence="53">
    <location>
        <begin position="219"/>
        <end position="221"/>
    </location>
</feature>
<feature type="strand" evidence="53">
    <location>
        <begin position="231"/>
        <end position="233"/>
    </location>
</feature>
<feature type="helix" evidence="53">
    <location>
        <begin position="237"/>
        <end position="242"/>
    </location>
</feature>
<feature type="turn" evidence="53">
    <location>
        <begin position="243"/>
        <end position="245"/>
    </location>
</feature>
<feature type="strand" evidence="53">
    <location>
        <begin position="247"/>
        <end position="250"/>
    </location>
</feature>
<feature type="strand" evidence="53">
    <location>
        <begin position="253"/>
        <end position="258"/>
    </location>
</feature>
<feature type="strand" evidence="56">
    <location>
        <begin position="263"/>
        <end position="265"/>
    </location>
</feature>
<feature type="strand" evidence="65">
    <location>
        <begin position="273"/>
        <end position="275"/>
    </location>
</feature>
<feature type="strand" evidence="64">
    <location>
        <begin position="283"/>
        <end position="285"/>
    </location>
</feature>
<feature type="strand" evidence="65">
    <location>
        <begin position="288"/>
        <end position="290"/>
    </location>
</feature>
<feature type="strand" evidence="65">
    <location>
        <begin position="292"/>
        <end position="294"/>
    </location>
</feature>
<feature type="strand" evidence="65">
    <location>
        <begin position="296"/>
        <end position="300"/>
    </location>
</feature>
<feature type="strand" evidence="62">
    <location>
        <begin position="302"/>
        <end position="305"/>
    </location>
</feature>
<feature type="strand" evidence="65">
    <location>
        <begin position="306"/>
        <end position="316"/>
    </location>
</feature>
<feature type="strand" evidence="66">
    <location>
        <begin position="321"/>
        <end position="331"/>
    </location>
</feature>
<feature type="strand" evidence="61">
    <location>
        <begin position="334"/>
        <end position="342"/>
    </location>
</feature>
<feature type="strand" evidence="65">
    <location>
        <begin position="343"/>
        <end position="347"/>
    </location>
</feature>
<feature type="strand" evidence="54">
    <location>
        <begin position="348"/>
        <end position="350"/>
    </location>
</feature>
<feature type="strand" evidence="65">
    <location>
        <begin position="353"/>
        <end position="356"/>
    </location>
</feature>
<feature type="strand" evidence="62">
    <location>
        <begin position="367"/>
        <end position="370"/>
    </location>
</feature>
<feature type="strand" evidence="62">
    <location>
        <begin position="373"/>
        <end position="378"/>
    </location>
</feature>
<feature type="strand" evidence="62">
    <location>
        <begin position="382"/>
        <end position="384"/>
    </location>
</feature>
<feature type="strand" evidence="62">
    <location>
        <begin position="389"/>
        <end position="395"/>
    </location>
</feature>
<feature type="strand" evidence="62">
    <location>
        <begin position="405"/>
        <end position="412"/>
    </location>
</feature>
<keyword id="KW-0002">3D-structure</keyword>
<keyword id="KW-0025">Alternative splicing</keyword>
<keyword id="KW-0036">Amyotrophic lateral sclerosis</keyword>
<keyword id="KW-0090">Biological rhythms</keyword>
<keyword id="KW-0963">Cytoplasm</keyword>
<keyword id="KW-0903">Direct protein sequencing</keyword>
<keyword id="KW-0225">Disease variant</keyword>
<keyword id="KW-0238">DNA-binding</keyword>
<keyword id="KW-1017">Isopeptide bond</keyword>
<keyword id="KW-0488">Methylation</keyword>
<keyword id="KW-0496">Mitochondrion</keyword>
<keyword id="KW-0507">mRNA processing</keyword>
<keyword id="KW-0508">mRNA splicing</keyword>
<keyword id="KW-0523">Neurodegeneration</keyword>
<keyword id="KW-0539">Nucleus</keyword>
<keyword id="KW-0597">Phosphoprotein</keyword>
<keyword id="KW-1267">Proteomics identification</keyword>
<keyword id="KW-1185">Reference proteome</keyword>
<keyword id="KW-0677">Repeat</keyword>
<keyword id="KW-0678">Repressor</keyword>
<keyword id="KW-0694">RNA-binding</keyword>
<keyword id="KW-0804">Transcription</keyword>
<keyword id="KW-0805">Transcription regulation</keyword>
<keyword id="KW-0832">Ubl conjugation</keyword>
<dbReference type="EMBL" id="U23731">
    <property type="protein sequence ID" value="AAA70033.1"/>
    <property type="molecule type" value="mRNA"/>
</dbReference>
<dbReference type="EMBL" id="EF434181">
    <property type="protein sequence ID" value="ABO32290.1"/>
    <property type="status" value="ALT_SEQ"/>
    <property type="molecule type" value="mRNA"/>
</dbReference>
<dbReference type="EMBL" id="EF434182">
    <property type="protein sequence ID" value="ABO32291.1"/>
    <property type="molecule type" value="mRNA"/>
</dbReference>
<dbReference type="EMBL" id="EF434183">
    <property type="protein sequence ID" value="ABO32292.1"/>
    <property type="status" value="ALT_SEQ"/>
    <property type="molecule type" value="mRNA"/>
</dbReference>
<dbReference type="EMBL" id="AK295920">
    <property type="protein sequence ID" value="BAG58707.1"/>
    <property type="molecule type" value="mRNA"/>
</dbReference>
<dbReference type="EMBL" id="AK312416">
    <property type="protein sequence ID" value="BAG35326.1"/>
    <property type="molecule type" value="mRNA"/>
</dbReference>
<dbReference type="EMBL" id="CR533534">
    <property type="protein sequence ID" value="CAG38565.1"/>
    <property type="molecule type" value="mRNA"/>
</dbReference>
<dbReference type="EMBL" id="AK222754">
    <property type="protein sequence ID" value="BAD96474.1"/>
    <property type="molecule type" value="mRNA"/>
</dbReference>
<dbReference type="EMBL" id="AL050265">
    <property type="protein sequence ID" value="CAB43367.1"/>
    <property type="molecule type" value="mRNA"/>
</dbReference>
<dbReference type="EMBL" id="AL109811">
    <property type="status" value="NOT_ANNOTATED_CDS"/>
    <property type="molecule type" value="Genomic_DNA"/>
</dbReference>
<dbReference type="EMBL" id="CH471130">
    <property type="protein sequence ID" value="EAW71670.1"/>
    <property type="molecule type" value="Genomic_DNA"/>
</dbReference>
<dbReference type="EMBL" id="BC071657">
    <property type="protein sequence ID" value="AAH71657.1"/>
    <property type="molecule type" value="mRNA"/>
</dbReference>
<dbReference type="EMBL" id="BC095435">
    <property type="protein sequence ID" value="AAH95435.1"/>
    <property type="molecule type" value="mRNA"/>
</dbReference>
<dbReference type="CCDS" id="CCDS122.1">
    <molecule id="Q13148-1"/>
</dbReference>
<dbReference type="PIR" id="I38977">
    <property type="entry name" value="I38977"/>
</dbReference>
<dbReference type="RefSeq" id="NP_031401.1">
    <molecule id="Q13148-1"/>
    <property type="nucleotide sequence ID" value="NM_007375.4"/>
</dbReference>
<dbReference type="RefSeq" id="XP_016856352.1">
    <property type="nucleotide sequence ID" value="XM_017000863.1"/>
</dbReference>
<dbReference type="RefSeq" id="XP_016856353.1">
    <property type="nucleotide sequence ID" value="XM_017000864.1"/>
</dbReference>
<dbReference type="RefSeq" id="XP_016856354.1">
    <property type="nucleotide sequence ID" value="XM_017000865.1"/>
</dbReference>
<dbReference type="RefSeq" id="XP_016856355.1">
    <property type="nucleotide sequence ID" value="XM_017000866.1"/>
</dbReference>
<dbReference type="RefSeq" id="XP_016856356.1">
    <property type="nucleotide sequence ID" value="XM_017000867.1"/>
</dbReference>
<dbReference type="RefSeq" id="XP_016856357.1">
    <property type="nucleotide sequence ID" value="XM_017000868.1"/>
</dbReference>
<dbReference type="PDB" id="1WF0">
    <property type="method" value="NMR"/>
    <property type="chains" value="A=193-267"/>
</dbReference>
<dbReference type="PDB" id="2CQG">
    <property type="method" value="NMR"/>
    <property type="chains" value="A=96-185"/>
</dbReference>
<dbReference type="PDB" id="2N2C">
    <property type="method" value="NMR"/>
    <property type="chains" value="A=307-349"/>
</dbReference>
<dbReference type="PDB" id="2N3X">
    <property type="method" value="NMR"/>
    <property type="chains" value="A=311-360"/>
</dbReference>
<dbReference type="PDB" id="2N4G">
    <property type="method" value="NMR"/>
    <property type="chains" value="A=311-360"/>
</dbReference>
<dbReference type="PDB" id="2N4H">
    <property type="method" value="NMR"/>
    <property type="chains" value="A=311-360"/>
</dbReference>
<dbReference type="PDB" id="2N4P">
    <property type="method" value="NMR"/>
    <property type="chains" value="A=1-77"/>
</dbReference>
<dbReference type="PDB" id="4BS2">
    <property type="method" value="NMR"/>
    <property type="chains" value="A=102-269"/>
</dbReference>
<dbReference type="PDB" id="4IUF">
    <property type="method" value="X-ray"/>
    <property type="resolution" value="2.75 A"/>
    <property type="chains" value="A=103-179"/>
</dbReference>
<dbReference type="PDB" id="4Y00">
    <property type="method" value="X-ray"/>
    <property type="resolution" value="3.00 A"/>
    <property type="chains" value="A/B/C/D=101-191"/>
</dbReference>
<dbReference type="PDB" id="4Y0F">
    <property type="method" value="X-ray"/>
    <property type="resolution" value="2.65 A"/>
    <property type="chains" value="A/B=101-191"/>
</dbReference>
<dbReference type="PDB" id="5MDI">
    <property type="method" value="X-ray"/>
    <property type="resolution" value="2.10 A"/>
    <property type="chains" value="A/B=2-80"/>
</dbReference>
<dbReference type="PDB" id="5MRG">
    <property type="method" value="NMR"/>
    <property type="chains" value="A=1-102"/>
</dbReference>
<dbReference type="PDB" id="5W50">
    <property type="method" value="X-ray"/>
    <property type="resolution" value="1.40 A"/>
    <property type="chains" value="A/B=248-253"/>
</dbReference>
<dbReference type="PDB" id="5W52">
    <property type="method" value="EM"/>
    <property type="resolution" value="1.40 A"/>
    <property type="chains" value="A=247-257"/>
</dbReference>
<dbReference type="PDB" id="5W7V">
    <property type="method" value="EM"/>
    <property type="resolution" value="3.80 A"/>
    <property type="chains" value="0/1/2/3/4/5/6/7/8=247-257"/>
</dbReference>
<dbReference type="PDB" id="5WHN">
    <property type="method" value="X-ray"/>
    <property type="resolution" value="1.10 A"/>
    <property type="chains" value="A=312-317"/>
</dbReference>
<dbReference type="PDB" id="5WHP">
    <property type="method" value="X-ray"/>
    <property type="resolution" value="1.00 A"/>
    <property type="chains" value="A=312-317"/>
</dbReference>
<dbReference type="PDB" id="5WIA">
    <property type="method" value="X-ray"/>
    <property type="resolution" value="1.00 A"/>
    <property type="chains" value="A=370-375"/>
</dbReference>
<dbReference type="PDB" id="5WIQ">
    <property type="method" value="X-ray"/>
    <property type="resolution" value="1.25 A"/>
    <property type="chains" value="A/B=396-402"/>
</dbReference>
<dbReference type="PDB" id="5WKB">
    <property type="method" value="EM"/>
    <property type="resolution" value="1.00 A"/>
    <property type="chains" value="A=312-317"/>
</dbReference>
<dbReference type="PDB" id="5WKD">
    <property type="method" value="X-ray"/>
    <property type="resolution" value="1.80 A"/>
    <property type="chains" value="A=300-306"/>
</dbReference>
<dbReference type="PDB" id="5X4F">
    <property type="method" value="NMR"/>
    <property type="chains" value="A=1-77"/>
</dbReference>
<dbReference type="PDB" id="6B1G">
    <property type="method" value="NMR"/>
    <property type="chains" value="A/B=1-80"/>
</dbReference>
<dbReference type="PDB" id="6CF4">
    <property type="method" value="EM"/>
    <property type="resolution" value="0.75 A"/>
    <property type="chains" value="A=312-317"/>
</dbReference>
<dbReference type="PDB" id="6CFH">
    <property type="method" value="EM"/>
    <property type="resolution" value="1.50 A"/>
    <property type="chains" value="A/B=333-343"/>
</dbReference>
<dbReference type="PDB" id="6N37">
    <property type="method" value="EM"/>
    <property type="resolution" value="3.80 A"/>
    <property type="chains" value="A/B/C/D/E/F/G/H/I/J=311-360"/>
</dbReference>
<dbReference type="PDB" id="6N3A">
    <property type="method" value="EM"/>
    <property type="resolution" value="3.30 A"/>
    <property type="chains" value="A/B/C/D/E/F/G/H/I/J=311-360"/>
</dbReference>
<dbReference type="PDB" id="6N3B">
    <property type="method" value="EM"/>
    <property type="resolution" value="3.80 A"/>
    <property type="chains" value="A/B/C/D/E/F/G/H/I/J=311-360"/>
</dbReference>
<dbReference type="PDB" id="6N3C">
    <property type="method" value="EM"/>
    <property type="resolution" value="3.30 A"/>
    <property type="chains" value="A/B/C/D/E/F/G/H/I/J/K/L/M/N/O/P/Q/R/S/T=286-331"/>
</dbReference>
<dbReference type="PDB" id="6T4B">
    <property type="method" value="X-ray"/>
    <property type="resolution" value="2.55 A"/>
    <property type="chains" value="A/C/E/G/I=1-80"/>
</dbReference>
<dbReference type="PDB" id="7KWZ">
    <property type="method" value="EM"/>
    <property type="resolution" value="3.20 A"/>
    <property type="chains" value="A/B/C/D/E=267-414"/>
</dbReference>
<dbReference type="PDB" id="7N9H">
    <property type="method" value="X-ray"/>
    <property type="resolution" value="2.20 A"/>
    <property type="chains" value="A=79-102"/>
</dbReference>
<dbReference type="PDB" id="7PY2">
    <property type="method" value="EM"/>
    <property type="resolution" value="2.60 A"/>
    <property type="chains" value="A/B/C/D=1-414"/>
</dbReference>
<dbReference type="PDB" id="7Q3U">
    <property type="method" value="EM"/>
    <property type="resolution" value="3.70 A"/>
    <property type="chains" value="A/B/C/D/E=279-360"/>
</dbReference>
<dbReference type="PDB" id="8A6I">
    <property type="method" value="NMR"/>
    <property type="chains" value="A=309-350"/>
</dbReference>
<dbReference type="PDB" id="8CG3">
    <property type="method" value="EM"/>
    <property type="resolution" value="2.39 A"/>
    <property type="chains" value="A/B/C/D/U=1-414"/>
</dbReference>
<dbReference type="PDB" id="8CGG">
    <property type="method" value="EM"/>
    <property type="resolution" value="2.50 A"/>
    <property type="chains" value="A/B/C/D/U=1-414"/>
</dbReference>
<dbReference type="PDB" id="8CGH">
    <property type="method" value="EM"/>
    <property type="resolution" value="2.68 A"/>
    <property type="chains" value="A/B/C/D/U=1-414"/>
</dbReference>
<dbReference type="PDB" id="8QX9">
    <property type="method" value="EM"/>
    <property type="resolution" value="3.76 A"/>
    <property type="chains" value="A/B/C/D/E/F/G/H/I/J/K/L=1-414"/>
</dbReference>
<dbReference type="PDB" id="8QXA">
    <property type="method" value="EM"/>
    <property type="resolution" value="4.05 A"/>
    <property type="chains" value="A/B/C/D/E/F/G/H/I/J/K/L=1-414"/>
</dbReference>
<dbReference type="PDB" id="8QXB">
    <property type="method" value="EM"/>
    <property type="resolution" value="3.86 A"/>
    <property type="chains" value="A/B/C/D/E/F/G/H/I/J/K/L/M/N/O/P/Q/R=1-414"/>
</dbReference>
<dbReference type="PDB" id="9FOF">
    <property type="method" value="EM"/>
    <property type="resolution" value="2.90 A"/>
    <property type="chains" value="A/C/E/G/I/q=282-345"/>
</dbReference>
<dbReference type="PDB" id="9FOR">
    <property type="method" value="EM"/>
    <property type="resolution" value="2.75 A"/>
    <property type="chains" value="A/C/E/G/o=284-345"/>
</dbReference>
<dbReference type="PDBsum" id="1WF0"/>
<dbReference type="PDBsum" id="2CQG"/>
<dbReference type="PDBsum" id="2N2C"/>
<dbReference type="PDBsum" id="2N3X"/>
<dbReference type="PDBsum" id="2N4G"/>
<dbReference type="PDBsum" id="2N4H"/>
<dbReference type="PDBsum" id="2N4P"/>
<dbReference type="PDBsum" id="4BS2"/>
<dbReference type="PDBsum" id="4IUF"/>
<dbReference type="PDBsum" id="4Y00"/>
<dbReference type="PDBsum" id="4Y0F"/>
<dbReference type="PDBsum" id="5MDI"/>
<dbReference type="PDBsum" id="5MRG"/>
<dbReference type="PDBsum" id="5W50"/>
<dbReference type="PDBsum" id="5W52"/>
<dbReference type="PDBsum" id="5W7V"/>
<dbReference type="PDBsum" id="5WHN"/>
<dbReference type="PDBsum" id="5WHP"/>
<dbReference type="PDBsum" id="5WIA"/>
<dbReference type="PDBsum" id="5WIQ"/>
<dbReference type="PDBsum" id="5WKB"/>
<dbReference type="PDBsum" id="5WKD"/>
<dbReference type="PDBsum" id="5X4F"/>
<dbReference type="PDBsum" id="6B1G"/>
<dbReference type="PDBsum" id="6CF4"/>
<dbReference type="PDBsum" id="6CFH"/>
<dbReference type="PDBsum" id="6N37"/>
<dbReference type="PDBsum" id="6N3A"/>
<dbReference type="PDBsum" id="6N3B"/>
<dbReference type="PDBsum" id="6N3C"/>
<dbReference type="PDBsum" id="6T4B"/>
<dbReference type="PDBsum" id="7KWZ"/>
<dbReference type="PDBsum" id="7N9H"/>
<dbReference type="PDBsum" id="7PY2"/>
<dbReference type="PDBsum" id="7Q3U"/>
<dbReference type="PDBsum" id="8A6I"/>
<dbReference type="PDBsum" id="8CG3"/>
<dbReference type="PDBsum" id="8CGG"/>
<dbReference type="PDBsum" id="8CGH"/>
<dbReference type="PDBsum" id="8QX9"/>
<dbReference type="PDBsum" id="8QXA"/>
<dbReference type="PDBsum" id="8QXB"/>
<dbReference type="PDBsum" id="9FOF"/>
<dbReference type="PDBsum" id="9FOR"/>
<dbReference type="BMRB" id="Q13148"/>
<dbReference type="EMDB" id="EMD-0334"/>
<dbReference type="EMDB" id="EMD-13708"/>
<dbReference type="EMDB" id="EMD-13795"/>
<dbReference type="EMDB" id="EMD-16628"/>
<dbReference type="EMDB" id="EMD-16642"/>
<dbReference type="EMDB" id="EMD-16643"/>
<dbReference type="EMDB" id="EMD-18715"/>
<dbReference type="EMDB" id="EMD-18716"/>
<dbReference type="EMDB" id="EMD-18717"/>
<dbReference type="EMDB" id="EMD-23059"/>
<dbReference type="EMDB" id="EMD-50621"/>
<dbReference type="EMDB" id="EMD-50628"/>
<dbReference type="EMDB" id="EMD-7467"/>
<dbReference type="EMDB" id="EMD-8765"/>
<dbReference type="EMDB" id="EMD-8781"/>
<dbReference type="EMDB" id="EMD-8857"/>
<dbReference type="EMDB" id="EMD-9339"/>
<dbReference type="EMDB" id="EMD-9349"/>
<dbReference type="EMDB" id="EMD-9350"/>
<dbReference type="SMR" id="Q13148"/>
<dbReference type="BioGRID" id="117003">
    <property type="interactions" value="567"/>
</dbReference>
<dbReference type="CORUM" id="Q13148"/>
<dbReference type="DIP" id="DIP-31167N"/>
<dbReference type="FunCoup" id="Q13148">
    <property type="interactions" value="5279"/>
</dbReference>
<dbReference type="IntAct" id="Q13148">
    <property type="interactions" value="297"/>
</dbReference>
<dbReference type="MINT" id="Q13148"/>
<dbReference type="STRING" id="9606.ENSP00000240185"/>
<dbReference type="BindingDB" id="Q13148"/>
<dbReference type="ChEMBL" id="CHEMBL2362981"/>
<dbReference type="DrugCentral" id="Q13148"/>
<dbReference type="GlyGen" id="Q13148">
    <property type="glycosylation" value="3 sites, 1 O-linked glycan (3 sites)"/>
</dbReference>
<dbReference type="iPTMnet" id="Q13148"/>
<dbReference type="MetOSite" id="Q13148"/>
<dbReference type="PhosphoSitePlus" id="Q13148"/>
<dbReference type="SwissPalm" id="Q13148"/>
<dbReference type="BioMuta" id="TARDBP"/>
<dbReference type="DMDM" id="20140568"/>
<dbReference type="jPOST" id="Q13148"/>
<dbReference type="MassIVE" id="Q13148"/>
<dbReference type="PaxDb" id="9606-ENSP00000240185"/>
<dbReference type="PeptideAtlas" id="Q13148"/>
<dbReference type="ProteomicsDB" id="4344"/>
<dbReference type="ProteomicsDB" id="59189">
    <molecule id="Q13148-1"/>
</dbReference>
<dbReference type="Pumba" id="Q13148"/>
<dbReference type="ABCD" id="Q13148">
    <property type="antibodies" value="22 sequenced antibodies"/>
</dbReference>
<dbReference type="Antibodypedia" id="1854">
    <property type="antibodies" value="1017 antibodies from 46 providers"/>
</dbReference>
<dbReference type="DNASU" id="23435"/>
<dbReference type="YCharOS" id="Q13148">
    <property type="antibodies" value="Tested 18 antibodies from 8 manufacturers"/>
</dbReference>
<dbReference type="Ensembl" id="ENST00000240185.8">
    <molecule id="Q13148-1"/>
    <property type="protein sequence ID" value="ENSP00000240185.4"/>
    <property type="gene ID" value="ENSG00000120948.19"/>
</dbReference>
<dbReference type="Ensembl" id="ENST00000639083.1">
    <molecule id="Q13148-1"/>
    <property type="protein sequence ID" value="ENSP00000491203.1"/>
    <property type="gene ID" value="ENSG00000120948.19"/>
</dbReference>
<dbReference type="GeneID" id="23435"/>
<dbReference type="KEGG" id="hsa:23435"/>
<dbReference type="MANE-Select" id="ENST00000240185.8">
    <property type="protein sequence ID" value="ENSP00000240185.4"/>
    <property type="RefSeq nucleotide sequence ID" value="NM_007375.4"/>
    <property type="RefSeq protein sequence ID" value="NP_031401.1"/>
</dbReference>
<dbReference type="UCSC" id="uc001art.4">
    <molecule id="Q13148-1"/>
    <property type="organism name" value="human"/>
</dbReference>
<dbReference type="AGR" id="HGNC:11571"/>
<dbReference type="CTD" id="23435"/>
<dbReference type="DisGeNET" id="23435"/>
<dbReference type="GeneCards" id="TARDBP"/>
<dbReference type="GeneReviews" id="TARDBP"/>
<dbReference type="HGNC" id="HGNC:11571">
    <property type="gene designation" value="TARDBP"/>
</dbReference>
<dbReference type="HPA" id="ENSG00000120948">
    <property type="expression patterns" value="Low tissue specificity"/>
</dbReference>
<dbReference type="MalaCards" id="TARDBP"/>
<dbReference type="MIM" id="605078">
    <property type="type" value="gene"/>
</dbReference>
<dbReference type="MIM" id="612069">
    <property type="type" value="phenotype"/>
</dbReference>
<dbReference type="neXtProt" id="NX_Q13148"/>
<dbReference type="OpenTargets" id="ENSG00000120948"/>
<dbReference type="Orphanet" id="803">
    <property type="disease" value="Amyotrophic lateral sclerosis"/>
</dbReference>
<dbReference type="Orphanet" id="275872">
    <property type="disease" value="Frontotemporal dementia with motor neuron disease"/>
</dbReference>
<dbReference type="PharmGKB" id="PA36336"/>
<dbReference type="VEuPathDB" id="HostDB:ENSG00000120948"/>
<dbReference type="eggNOG" id="ENOG502QPQ8">
    <property type="taxonomic scope" value="Eukaryota"/>
</dbReference>
<dbReference type="GeneTree" id="ENSGT00940000154343"/>
<dbReference type="HOGENOM" id="CLU_012062_6_1_1"/>
<dbReference type="InParanoid" id="Q13148"/>
<dbReference type="OMA" id="WGSASNP"/>
<dbReference type="PAN-GO" id="Q13148">
    <property type="GO annotations" value="3 GO annotations based on evolutionary models"/>
</dbReference>
<dbReference type="PhylomeDB" id="Q13148"/>
<dbReference type="TreeFam" id="TF315657"/>
<dbReference type="PathwayCommons" id="Q13148"/>
<dbReference type="SignaLink" id="Q13148"/>
<dbReference type="SIGNOR" id="Q13148"/>
<dbReference type="BioGRID-ORCS" id="23435">
    <property type="hits" value="724 hits in 1132 CRISPR screens"/>
</dbReference>
<dbReference type="CD-CODE" id="0A6B6B10">
    <property type="entry name" value="Synthetic Condensate 000350"/>
</dbReference>
<dbReference type="CD-CODE" id="1A18FFC4">
    <property type="entry name" value="Paraspeckle"/>
</dbReference>
<dbReference type="CD-CODE" id="232F8A39">
    <property type="entry name" value="P-body"/>
</dbReference>
<dbReference type="CD-CODE" id="29DC92C3">
    <property type="entry name" value="Synthetic Condensate 000232"/>
</dbReference>
<dbReference type="CD-CODE" id="4CAAAA97">
    <property type="entry name" value="Synthetic Condensate 000349"/>
</dbReference>
<dbReference type="CD-CODE" id="6209F224">
    <property type="entry name" value="Synthetic Condensate 000281"/>
</dbReference>
<dbReference type="CD-CODE" id="6F24707C">
    <property type="entry name" value="Cajal body"/>
</dbReference>
<dbReference type="CD-CODE" id="85C30F04">
    <property type="entry name" value="Synthetic Condensate 000057"/>
</dbReference>
<dbReference type="CD-CODE" id="91857CE7">
    <property type="entry name" value="Nucleolus"/>
</dbReference>
<dbReference type="CD-CODE" id="95CA54FE">
    <property type="entry name" value="Synthetic Condensate 000215"/>
</dbReference>
<dbReference type="CD-CODE" id="9B5E283A">
    <property type="entry name" value="Synthetic Condensate 000373"/>
</dbReference>
<dbReference type="CD-CODE" id="BEB5E62D">
    <property type="entry name" value="Anisosome"/>
</dbReference>
<dbReference type="CD-CODE" id="C4C56ED2">
    <property type="entry name" value="TDP-25 inclusions"/>
</dbReference>
<dbReference type="CD-CODE" id="CC266C53">
    <property type="entry name" value="Synthetic Condensate 000179"/>
</dbReference>
<dbReference type="CD-CODE" id="D8E9712B">
    <property type="entry name" value="Neuronal RNP granule"/>
</dbReference>
<dbReference type="CD-CODE" id="DEE660B4">
    <property type="entry name" value="Stress granule"/>
</dbReference>
<dbReference type="CD-CODE" id="E1879998">
    <property type="entry name" value="Synthetic Condensate 000375"/>
</dbReference>
<dbReference type="CD-CODE" id="E3E4F6CC">
    <property type="entry name" value="Synthetic Condensate 000302"/>
</dbReference>
<dbReference type="CD-CODE" id="ED4B3785">
    <property type="entry name" value="Synthetic Condensate 000058"/>
</dbReference>
<dbReference type="CD-CODE" id="F15C9420">
    <property type="entry name" value="Synthetic Condensate 000300"/>
</dbReference>
<dbReference type="CD-CODE" id="F50842E4">
    <property type="entry name" value="Synthetic Condensate 000357"/>
</dbReference>
<dbReference type="CD-CODE" id="F85A2E29">
    <property type="entry name" value="IMP1 RNP granule"/>
</dbReference>
<dbReference type="ChiTaRS" id="TARDBP">
    <property type="organism name" value="human"/>
</dbReference>
<dbReference type="EvolutionaryTrace" id="Q13148"/>
<dbReference type="GeneWiki" id="TARDBP"/>
<dbReference type="GenomeRNAi" id="23435"/>
<dbReference type="Pharos" id="Q13148">
    <property type="development level" value="Tchem"/>
</dbReference>
<dbReference type="PRO" id="PR:Q13148"/>
<dbReference type="Proteomes" id="UP000005640">
    <property type="component" value="Chromosome 1"/>
</dbReference>
<dbReference type="RNAct" id="Q13148">
    <property type="molecule type" value="protein"/>
</dbReference>
<dbReference type="Bgee" id="ENSG00000120948">
    <property type="expression patterns" value="Expressed in secondary oocyte and 207 other cell types or tissues"/>
</dbReference>
<dbReference type="ExpressionAtlas" id="Q13148">
    <property type="expression patterns" value="baseline and differential"/>
</dbReference>
<dbReference type="GO" id="GO:0000785">
    <property type="term" value="C:chromatin"/>
    <property type="evidence" value="ECO:0000318"/>
    <property type="project" value="GO_Central"/>
</dbReference>
<dbReference type="GO" id="GO:0010494">
    <property type="term" value="C:cytoplasmic stress granule"/>
    <property type="evidence" value="ECO:0007669"/>
    <property type="project" value="UniProtKB-SubCell"/>
</dbReference>
<dbReference type="GO" id="GO:0035061">
    <property type="term" value="C:interchromatin granule"/>
    <property type="evidence" value="ECO:0007669"/>
    <property type="project" value="Ensembl"/>
</dbReference>
<dbReference type="GO" id="GO:0043232">
    <property type="term" value="C:intracellular membraneless organelle"/>
    <property type="evidence" value="ECO:0000314"/>
    <property type="project" value="DisProt"/>
</dbReference>
<dbReference type="GO" id="GO:0005739">
    <property type="term" value="C:mitochondrion"/>
    <property type="evidence" value="ECO:0007669"/>
    <property type="project" value="UniProtKB-SubCell"/>
</dbReference>
<dbReference type="GO" id="GO:0016607">
    <property type="term" value="C:nuclear speck"/>
    <property type="evidence" value="ECO:0007669"/>
    <property type="project" value="Ensembl"/>
</dbReference>
<dbReference type="GO" id="GO:0005654">
    <property type="term" value="C:nucleoplasm"/>
    <property type="evidence" value="ECO:0000314"/>
    <property type="project" value="HPA"/>
</dbReference>
<dbReference type="GO" id="GO:0005634">
    <property type="term" value="C:nucleus"/>
    <property type="evidence" value="ECO:0000314"/>
    <property type="project" value="UniProtKB"/>
</dbReference>
<dbReference type="GO" id="GO:0005726">
    <property type="term" value="C:perichromatin fibrils"/>
    <property type="evidence" value="ECO:0007669"/>
    <property type="project" value="Ensembl"/>
</dbReference>
<dbReference type="GO" id="GO:0003677">
    <property type="term" value="F:DNA binding"/>
    <property type="evidence" value="ECO:0000269"/>
    <property type="project" value="DisProt"/>
</dbReference>
<dbReference type="GO" id="GO:0003690">
    <property type="term" value="F:double-stranded DNA binding"/>
    <property type="evidence" value="ECO:0000314"/>
    <property type="project" value="BHF-UCL"/>
</dbReference>
<dbReference type="GO" id="GO:0042802">
    <property type="term" value="F:identical protein binding"/>
    <property type="evidence" value="ECO:0000353"/>
    <property type="project" value="IntAct"/>
</dbReference>
<dbReference type="GO" id="GO:0008289">
    <property type="term" value="F:lipid binding"/>
    <property type="evidence" value="ECO:0000269"/>
    <property type="project" value="DisProt"/>
</dbReference>
<dbReference type="GO" id="GO:0140693">
    <property type="term" value="F:molecular condensate scaffold activity"/>
    <property type="evidence" value="ECO:0000314"/>
    <property type="project" value="DisProt"/>
</dbReference>
<dbReference type="GO" id="GO:0003730">
    <property type="term" value="F:mRNA 3'-UTR binding"/>
    <property type="evidence" value="ECO:0000314"/>
    <property type="project" value="BHF-UCL"/>
</dbReference>
<dbReference type="GO" id="GO:0097157">
    <property type="term" value="F:pre-mRNA intronic binding"/>
    <property type="evidence" value="ECO:0007669"/>
    <property type="project" value="Ensembl"/>
</dbReference>
<dbReference type="GO" id="GO:0003723">
    <property type="term" value="F:RNA binding"/>
    <property type="evidence" value="ECO:0000314"/>
    <property type="project" value="BHF-UCL"/>
</dbReference>
<dbReference type="GO" id="GO:0000978">
    <property type="term" value="F:RNA polymerase II cis-regulatory region sequence-specific DNA binding"/>
    <property type="evidence" value="ECO:0007669"/>
    <property type="project" value="Ensembl"/>
</dbReference>
<dbReference type="GO" id="GO:0061158">
    <property type="term" value="P:3'-UTR-mediated mRNA destabilization"/>
    <property type="evidence" value="ECO:0000314"/>
    <property type="project" value="CACAO"/>
</dbReference>
<dbReference type="GO" id="GO:0070935">
    <property type="term" value="P:3'-UTR-mediated mRNA stabilization"/>
    <property type="evidence" value="ECO:0000314"/>
    <property type="project" value="BHF-UCL"/>
</dbReference>
<dbReference type="GO" id="GO:1990000">
    <property type="term" value="P:amyloid fibril formation"/>
    <property type="evidence" value="ECO:0000314"/>
    <property type="project" value="DisProt"/>
</dbReference>
<dbReference type="GO" id="GO:0006397">
    <property type="term" value="P:mRNA processing"/>
    <property type="evidence" value="ECO:0007669"/>
    <property type="project" value="UniProtKB-KW"/>
</dbReference>
<dbReference type="GO" id="GO:0043922">
    <property type="term" value="P:negative regulation by host of viral transcription"/>
    <property type="evidence" value="ECO:0000314"/>
    <property type="project" value="BHF-UCL"/>
</dbReference>
<dbReference type="GO" id="GO:0010629">
    <property type="term" value="P:negative regulation of gene expression"/>
    <property type="evidence" value="ECO:0000315"/>
    <property type="project" value="CACAO"/>
</dbReference>
<dbReference type="GO" id="GO:0001933">
    <property type="term" value="P:negative regulation of protein phosphorylation"/>
    <property type="evidence" value="ECO:0000315"/>
    <property type="project" value="CACAO"/>
</dbReference>
<dbReference type="GO" id="GO:0071765">
    <property type="term" value="P:nuclear inner membrane organization"/>
    <property type="evidence" value="ECO:0000315"/>
    <property type="project" value="CACAO"/>
</dbReference>
<dbReference type="GO" id="GO:0032024">
    <property type="term" value="P:positive regulation of insulin secretion"/>
    <property type="evidence" value="ECO:0007669"/>
    <property type="project" value="Ensembl"/>
</dbReference>
<dbReference type="GO" id="GO:0042307">
    <property type="term" value="P:positive regulation of protein import into nucleus"/>
    <property type="evidence" value="ECO:0007669"/>
    <property type="project" value="Ensembl"/>
</dbReference>
<dbReference type="GO" id="GO:0042981">
    <property type="term" value="P:regulation of apoptotic process"/>
    <property type="evidence" value="ECO:0000315"/>
    <property type="project" value="CACAO"/>
</dbReference>
<dbReference type="GO" id="GO:0051726">
    <property type="term" value="P:regulation of cell cycle"/>
    <property type="evidence" value="ECO:0000315"/>
    <property type="project" value="CACAO"/>
</dbReference>
<dbReference type="GO" id="GO:0042752">
    <property type="term" value="P:regulation of circadian rhythm"/>
    <property type="evidence" value="ECO:0007669"/>
    <property type="project" value="Ensembl"/>
</dbReference>
<dbReference type="GO" id="GO:0010468">
    <property type="term" value="P:regulation of gene expression"/>
    <property type="evidence" value="ECO:0000318"/>
    <property type="project" value="GO_Central"/>
</dbReference>
<dbReference type="GO" id="GO:0031647">
    <property type="term" value="P:regulation of protein stability"/>
    <property type="evidence" value="ECO:0000315"/>
    <property type="project" value="UniProtKB"/>
</dbReference>
<dbReference type="GO" id="GO:0034976">
    <property type="term" value="P:response to endoplasmic reticulum stress"/>
    <property type="evidence" value="ECO:0007669"/>
    <property type="project" value="Ensembl"/>
</dbReference>
<dbReference type="GO" id="GO:0048511">
    <property type="term" value="P:rhythmic process"/>
    <property type="evidence" value="ECO:0007669"/>
    <property type="project" value="UniProtKB-KW"/>
</dbReference>
<dbReference type="GO" id="GO:0008380">
    <property type="term" value="P:RNA splicing"/>
    <property type="evidence" value="ECO:0000314"/>
    <property type="project" value="BHF-UCL"/>
</dbReference>
<dbReference type="CDD" id="cd19609">
    <property type="entry name" value="NTD_TDP-43"/>
    <property type="match status" value="1"/>
</dbReference>
<dbReference type="CDD" id="cd12321">
    <property type="entry name" value="RRM1_TDP43"/>
    <property type="match status" value="1"/>
</dbReference>
<dbReference type="CDD" id="cd12322">
    <property type="entry name" value="RRM2_TDP43"/>
    <property type="match status" value="1"/>
</dbReference>
<dbReference type="DisProt" id="DP01108"/>
<dbReference type="FunFam" id="3.30.70.330:FF:000098">
    <property type="entry name" value="TAR DNA-binding protein 43"/>
    <property type="match status" value="1"/>
</dbReference>
<dbReference type="FunFam" id="3.30.70.330:FF:000107">
    <property type="entry name" value="TAR DNA-binding protein 43"/>
    <property type="match status" value="1"/>
</dbReference>
<dbReference type="Gene3D" id="3.30.70.330">
    <property type="match status" value="2"/>
</dbReference>
<dbReference type="InterPro" id="IPR012677">
    <property type="entry name" value="Nucleotide-bd_a/b_plait_sf"/>
</dbReference>
<dbReference type="InterPro" id="IPR035979">
    <property type="entry name" value="RBD_domain_sf"/>
</dbReference>
<dbReference type="InterPro" id="IPR000504">
    <property type="entry name" value="RRM_dom"/>
</dbReference>
<dbReference type="InterPro" id="IPR049124">
    <property type="entry name" value="TDP-43_C"/>
</dbReference>
<dbReference type="InterPro" id="IPR041105">
    <property type="entry name" value="TDP-43_N"/>
</dbReference>
<dbReference type="PANTHER" id="PTHR48033">
    <property type="entry name" value="RNA-BINDING (RRM/RBD/RNP MOTIFS) FAMILY PROTEIN"/>
    <property type="match status" value="1"/>
</dbReference>
<dbReference type="PANTHER" id="PTHR48033:SF9">
    <property type="entry name" value="TAR DNA-BINDING PROTEIN 43"/>
    <property type="match status" value="1"/>
</dbReference>
<dbReference type="Pfam" id="PF00076">
    <property type="entry name" value="RRM_1"/>
    <property type="match status" value="2"/>
</dbReference>
<dbReference type="Pfam" id="PF20910">
    <property type="entry name" value="TDP-43_C"/>
    <property type="match status" value="1"/>
</dbReference>
<dbReference type="Pfam" id="PF18694">
    <property type="entry name" value="TDP-43_N"/>
    <property type="match status" value="1"/>
</dbReference>
<dbReference type="SMART" id="SM00360">
    <property type="entry name" value="RRM"/>
    <property type="match status" value="2"/>
</dbReference>
<dbReference type="SUPFAM" id="SSF54928">
    <property type="entry name" value="RNA-binding domain, RBD"/>
    <property type="match status" value="2"/>
</dbReference>
<dbReference type="PROSITE" id="PS50102">
    <property type="entry name" value="RRM"/>
    <property type="match status" value="2"/>
</dbReference>
<name>TADBP_HUMAN</name>
<gene>
    <name evidence="42 45" type="primary">TARDBP</name>
    <name evidence="43" type="synonym">TDP43</name>
</gene>
<accession>Q13148</accession>
<accession>A4GUK4</accession>
<accession>A4GUK5</accession>
<accession>A4GUK6</accession>
<accession>B2R629</accession>
<accession>B4DJ45</accession>
<accession>E2PU12</accession>
<accession>Q53H27</accession>
<accession>Q6FI92</accession>
<accession>Q96DJ0</accession>
<reference key="1">
    <citation type="journal article" date="1995" name="J. Virol.">
        <title>Cloning and characterization of a novel cellular protein, TDP-43, that binds to human immunodeficiency virus type 1 TAR DNA sequence motifs.</title>
        <authorList>
            <person name="Ou S.-H.I."/>
            <person name="Wu F."/>
            <person name="Harrich D."/>
            <person name="Garcia-Martinez L.F."/>
            <person name="Gaynor R.B."/>
        </authorList>
    </citation>
    <scope>NUCLEOTIDE SEQUENCE [MRNA] (ISOFORM 1)</scope>
    <scope>CHARACTERIZATION</scope>
    <source>
        <tissue>Cervix carcinoma</tissue>
    </source>
</reference>
<reference key="2">
    <citation type="journal article" date="2007" name="Mol. Cell. Neurosci.">
        <title>TDP43 is a human low molecular weight neurofilament (hNFL) mRNA-binding protein.</title>
        <authorList>
            <person name="Strong M.J."/>
            <person name="Volkening K."/>
            <person name="Hammond R."/>
            <person name="Yang W."/>
            <person name="Strong W."/>
            <person name="Leystra-Lantz C."/>
            <person name="Shoesmith C."/>
        </authorList>
    </citation>
    <scope>NUCLEOTIDE SEQUENCE [MRNA] (ISOFORM 1)</scope>
    <scope>FUNCTION</scope>
    <scope>SUBCELLULAR LOCATION</scope>
    <scope>UBIQUITINATION</scope>
</reference>
<reference key="3">
    <citation type="journal article" date="2004" name="Nat. Genet.">
        <title>Complete sequencing and characterization of 21,243 full-length human cDNAs.</title>
        <authorList>
            <person name="Ota T."/>
            <person name="Suzuki Y."/>
            <person name="Nishikawa T."/>
            <person name="Otsuki T."/>
            <person name="Sugiyama T."/>
            <person name="Irie R."/>
            <person name="Wakamatsu A."/>
            <person name="Hayashi K."/>
            <person name="Sato H."/>
            <person name="Nagai K."/>
            <person name="Kimura K."/>
            <person name="Makita H."/>
            <person name="Sekine M."/>
            <person name="Obayashi M."/>
            <person name="Nishi T."/>
            <person name="Shibahara T."/>
            <person name="Tanaka T."/>
            <person name="Ishii S."/>
            <person name="Yamamoto J."/>
            <person name="Saito K."/>
            <person name="Kawai Y."/>
            <person name="Isono Y."/>
            <person name="Nakamura Y."/>
            <person name="Nagahari K."/>
            <person name="Murakami K."/>
            <person name="Yasuda T."/>
            <person name="Iwayanagi T."/>
            <person name="Wagatsuma M."/>
            <person name="Shiratori A."/>
            <person name="Sudo H."/>
            <person name="Hosoiri T."/>
            <person name="Kaku Y."/>
            <person name="Kodaira H."/>
            <person name="Kondo H."/>
            <person name="Sugawara M."/>
            <person name="Takahashi M."/>
            <person name="Kanda K."/>
            <person name="Yokoi T."/>
            <person name="Furuya T."/>
            <person name="Kikkawa E."/>
            <person name="Omura Y."/>
            <person name="Abe K."/>
            <person name="Kamihara K."/>
            <person name="Katsuta N."/>
            <person name="Sato K."/>
            <person name="Tanikawa M."/>
            <person name="Yamazaki M."/>
            <person name="Ninomiya K."/>
            <person name="Ishibashi T."/>
            <person name="Yamashita H."/>
            <person name="Murakawa K."/>
            <person name="Fujimori K."/>
            <person name="Tanai H."/>
            <person name="Kimata M."/>
            <person name="Watanabe M."/>
            <person name="Hiraoka S."/>
            <person name="Chiba Y."/>
            <person name="Ishida S."/>
            <person name="Ono Y."/>
            <person name="Takiguchi S."/>
            <person name="Watanabe S."/>
            <person name="Yosida M."/>
            <person name="Hotuta T."/>
            <person name="Kusano J."/>
            <person name="Kanehori K."/>
            <person name="Takahashi-Fujii A."/>
            <person name="Hara H."/>
            <person name="Tanase T.-O."/>
            <person name="Nomura Y."/>
            <person name="Togiya S."/>
            <person name="Komai F."/>
            <person name="Hara R."/>
            <person name="Takeuchi K."/>
            <person name="Arita M."/>
            <person name="Imose N."/>
            <person name="Musashino K."/>
            <person name="Yuuki H."/>
            <person name="Oshima A."/>
            <person name="Sasaki N."/>
            <person name="Aotsuka S."/>
            <person name="Yoshikawa Y."/>
            <person name="Matsunawa H."/>
            <person name="Ichihara T."/>
            <person name="Shiohata N."/>
            <person name="Sano S."/>
            <person name="Moriya S."/>
            <person name="Momiyama H."/>
            <person name="Satoh N."/>
            <person name="Takami S."/>
            <person name="Terashima Y."/>
            <person name="Suzuki O."/>
            <person name="Nakagawa S."/>
            <person name="Senoh A."/>
            <person name="Mizoguchi H."/>
            <person name="Goto Y."/>
            <person name="Shimizu F."/>
            <person name="Wakebe H."/>
            <person name="Hishigaki H."/>
            <person name="Watanabe T."/>
            <person name="Sugiyama A."/>
            <person name="Takemoto M."/>
            <person name="Kawakami B."/>
            <person name="Yamazaki M."/>
            <person name="Watanabe K."/>
            <person name="Kumagai A."/>
            <person name="Itakura S."/>
            <person name="Fukuzumi Y."/>
            <person name="Fujimori Y."/>
            <person name="Komiyama M."/>
            <person name="Tashiro H."/>
            <person name="Tanigami A."/>
            <person name="Fujiwara T."/>
            <person name="Ono T."/>
            <person name="Yamada K."/>
            <person name="Fujii Y."/>
            <person name="Ozaki K."/>
            <person name="Hirao M."/>
            <person name="Ohmori Y."/>
            <person name="Kawabata A."/>
            <person name="Hikiji T."/>
            <person name="Kobatake N."/>
            <person name="Inagaki H."/>
            <person name="Ikema Y."/>
            <person name="Okamoto S."/>
            <person name="Okitani R."/>
            <person name="Kawakami T."/>
            <person name="Noguchi S."/>
            <person name="Itoh T."/>
            <person name="Shigeta K."/>
            <person name="Senba T."/>
            <person name="Matsumura K."/>
            <person name="Nakajima Y."/>
            <person name="Mizuno T."/>
            <person name="Morinaga M."/>
            <person name="Sasaki M."/>
            <person name="Togashi T."/>
            <person name="Oyama M."/>
            <person name="Hata H."/>
            <person name="Watanabe M."/>
            <person name="Komatsu T."/>
            <person name="Mizushima-Sugano J."/>
            <person name="Satoh T."/>
            <person name="Shirai Y."/>
            <person name="Takahashi Y."/>
            <person name="Nakagawa K."/>
            <person name="Okumura K."/>
            <person name="Nagase T."/>
            <person name="Nomura N."/>
            <person name="Kikuchi H."/>
            <person name="Masuho Y."/>
            <person name="Yamashita R."/>
            <person name="Nakai K."/>
            <person name="Yada T."/>
            <person name="Nakamura Y."/>
            <person name="Ohara O."/>
            <person name="Isogai T."/>
            <person name="Sugano S."/>
        </authorList>
    </citation>
    <scope>NUCLEOTIDE SEQUENCE [LARGE SCALE MRNA] (ISOFORMS 1 AND 2)</scope>
    <source>
        <tissue>Brain</tissue>
        <tissue>Substantia nigra</tissue>
    </source>
</reference>
<reference key="4">
    <citation type="submission" date="2004-06" db="EMBL/GenBank/DDBJ databases">
        <title>Cloning of human full open reading frames in Gateway(TM) system entry vector (pDONR201).</title>
        <authorList>
            <person name="Ebert L."/>
            <person name="Schick M."/>
            <person name="Neubert P."/>
            <person name="Schatten R."/>
            <person name="Henze S."/>
            <person name="Korn B."/>
        </authorList>
    </citation>
    <scope>NUCLEOTIDE SEQUENCE [LARGE SCALE MRNA] (ISOFORM 1)</scope>
</reference>
<reference key="5">
    <citation type="submission" date="2005-04" db="EMBL/GenBank/DDBJ databases">
        <authorList>
            <person name="Suzuki Y."/>
            <person name="Sugano S."/>
            <person name="Totoki Y."/>
            <person name="Toyoda A."/>
            <person name="Takeda T."/>
            <person name="Sakaki Y."/>
            <person name="Tanaka A."/>
            <person name="Yokoyama S."/>
        </authorList>
    </citation>
    <scope>NUCLEOTIDE SEQUENCE [LARGE SCALE MRNA] (ISOFORM 1)</scope>
    <source>
        <tissue>Liver</tissue>
    </source>
</reference>
<reference key="6">
    <citation type="journal article" date="2007" name="BMC Genomics">
        <title>The full-ORF clone resource of the German cDNA consortium.</title>
        <authorList>
            <person name="Bechtel S."/>
            <person name="Rosenfelder H."/>
            <person name="Duda A."/>
            <person name="Schmidt C.P."/>
            <person name="Ernst U."/>
            <person name="Wellenreuther R."/>
            <person name="Mehrle A."/>
            <person name="Schuster C."/>
            <person name="Bahr A."/>
            <person name="Bloecker H."/>
            <person name="Heubner D."/>
            <person name="Hoerlein A."/>
            <person name="Michel G."/>
            <person name="Wedler H."/>
            <person name="Koehrer K."/>
            <person name="Ottenwaelder B."/>
            <person name="Poustka A."/>
            <person name="Wiemann S."/>
            <person name="Schupp I."/>
        </authorList>
    </citation>
    <scope>NUCLEOTIDE SEQUENCE [LARGE SCALE MRNA] (ISOFORM 1)</scope>
    <source>
        <tissue>Brain</tissue>
    </source>
</reference>
<reference key="7">
    <citation type="journal article" date="2006" name="Nature">
        <title>The DNA sequence and biological annotation of human chromosome 1.</title>
        <authorList>
            <person name="Gregory S.G."/>
            <person name="Barlow K.F."/>
            <person name="McLay K.E."/>
            <person name="Kaul R."/>
            <person name="Swarbreck D."/>
            <person name="Dunham A."/>
            <person name="Scott C.E."/>
            <person name="Howe K.L."/>
            <person name="Woodfine K."/>
            <person name="Spencer C.C.A."/>
            <person name="Jones M.C."/>
            <person name="Gillson C."/>
            <person name="Searle S."/>
            <person name="Zhou Y."/>
            <person name="Kokocinski F."/>
            <person name="McDonald L."/>
            <person name="Evans R."/>
            <person name="Phillips K."/>
            <person name="Atkinson A."/>
            <person name="Cooper R."/>
            <person name="Jones C."/>
            <person name="Hall R.E."/>
            <person name="Andrews T.D."/>
            <person name="Lloyd C."/>
            <person name="Ainscough R."/>
            <person name="Almeida J.P."/>
            <person name="Ambrose K.D."/>
            <person name="Anderson F."/>
            <person name="Andrew R.W."/>
            <person name="Ashwell R.I.S."/>
            <person name="Aubin K."/>
            <person name="Babbage A.K."/>
            <person name="Bagguley C.L."/>
            <person name="Bailey J."/>
            <person name="Beasley H."/>
            <person name="Bethel G."/>
            <person name="Bird C.P."/>
            <person name="Bray-Allen S."/>
            <person name="Brown J.Y."/>
            <person name="Brown A.J."/>
            <person name="Buckley D."/>
            <person name="Burton J."/>
            <person name="Bye J."/>
            <person name="Carder C."/>
            <person name="Chapman J.C."/>
            <person name="Clark S.Y."/>
            <person name="Clarke G."/>
            <person name="Clee C."/>
            <person name="Cobley V."/>
            <person name="Collier R.E."/>
            <person name="Corby N."/>
            <person name="Coville G.J."/>
            <person name="Davies J."/>
            <person name="Deadman R."/>
            <person name="Dunn M."/>
            <person name="Earthrowl M."/>
            <person name="Ellington A.G."/>
            <person name="Errington H."/>
            <person name="Frankish A."/>
            <person name="Frankland J."/>
            <person name="French L."/>
            <person name="Garner P."/>
            <person name="Garnett J."/>
            <person name="Gay L."/>
            <person name="Ghori M.R.J."/>
            <person name="Gibson R."/>
            <person name="Gilby L.M."/>
            <person name="Gillett W."/>
            <person name="Glithero R.J."/>
            <person name="Grafham D.V."/>
            <person name="Griffiths C."/>
            <person name="Griffiths-Jones S."/>
            <person name="Grocock R."/>
            <person name="Hammond S."/>
            <person name="Harrison E.S.I."/>
            <person name="Hart E."/>
            <person name="Haugen E."/>
            <person name="Heath P.D."/>
            <person name="Holmes S."/>
            <person name="Holt K."/>
            <person name="Howden P.J."/>
            <person name="Hunt A.R."/>
            <person name="Hunt S.E."/>
            <person name="Hunter G."/>
            <person name="Isherwood J."/>
            <person name="James R."/>
            <person name="Johnson C."/>
            <person name="Johnson D."/>
            <person name="Joy A."/>
            <person name="Kay M."/>
            <person name="Kershaw J.K."/>
            <person name="Kibukawa M."/>
            <person name="Kimberley A.M."/>
            <person name="King A."/>
            <person name="Knights A.J."/>
            <person name="Lad H."/>
            <person name="Laird G."/>
            <person name="Lawlor S."/>
            <person name="Leongamornlert D.A."/>
            <person name="Lloyd D.M."/>
            <person name="Loveland J."/>
            <person name="Lovell J."/>
            <person name="Lush M.J."/>
            <person name="Lyne R."/>
            <person name="Martin S."/>
            <person name="Mashreghi-Mohammadi M."/>
            <person name="Matthews L."/>
            <person name="Matthews N.S.W."/>
            <person name="McLaren S."/>
            <person name="Milne S."/>
            <person name="Mistry S."/>
            <person name="Moore M.J.F."/>
            <person name="Nickerson T."/>
            <person name="O'Dell C.N."/>
            <person name="Oliver K."/>
            <person name="Palmeiri A."/>
            <person name="Palmer S.A."/>
            <person name="Parker A."/>
            <person name="Patel D."/>
            <person name="Pearce A.V."/>
            <person name="Peck A.I."/>
            <person name="Pelan S."/>
            <person name="Phelps K."/>
            <person name="Phillimore B.J."/>
            <person name="Plumb R."/>
            <person name="Rajan J."/>
            <person name="Raymond C."/>
            <person name="Rouse G."/>
            <person name="Saenphimmachak C."/>
            <person name="Sehra H.K."/>
            <person name="Sheridan E."/>
            <person name="Shownkeen R."/>
            <person name="Sims S."/>
            <person name="Skuce C.D."/>
            <person name="Smith M."/>
            <person name="Steward C."/>
            <person name="Subramanian S."/>
            <person name="Sycamore N."/>
            <person name="Tracey A."/>
            <person name="Tromans A."/>
            <person name="Van Helmond Z."/>
            <person name="Wall M."/>
            <person name="Wallis J.M."/>
            <person name="White S."/>
            <person name="Whitehead S.L."/>
            <person name="Wilkinson J.E."/>
            <person name="Willey D.L."/>
            <person name="Williams H."/>
            <person name="Wilming L."/>
            <person name="Wray P.W."/>
            <person name="Wu Z."/>
            <person name="Coulson A."/>
            <person name="Vaudin M."/>
            <person name="Sulston J.E."/>
            <person name="Durbin R.M."/>
            <person name="Hubbard T."/>
            <person name="Wooster R."/>
            <person name="Dunham I."/>
            <person name="Carter N.P."/>
            <person name="McVean G."/>
            <person name="Ross M.T."/>
            <person name="Harrow J."/>
            <person name="Olson M.V."/>
            <person name="Beck S."/>
            <person name="Rogers J."/>
            <person name="Bentley D.R."/>
        </authorList>
    </citation>
    <scope>NUCLEOTIDE SEQUENCE [LARGE SCALE GENOMIC DNA]</scope>
</reference>
<reference key="8">
    <citation type="submission" date="2005-07" db="EMBL/GenBank/DDBJ databases">
        <authorList>
            <person name="Mural R.J."/>
            <person name="Istrail S."/>
            <person name="Sutton G.G."/>
            <person name="Florea L."/>
            <person name="Halpern A.L."/>
            <person name="Mobarry C.M."/>
            <person name="Lippert R."/>
            <person name="Walenz B."/>
            <person name="Shatkay H."/>
            <person name="Dew I."/>
            <person name="Miller J.R."/>
            <person name="Flanigan M.J."/>
            <person name="Edwards N.J."/>
            <person name="Bolanos R."/>
            <person name="Fasulo D."/>
            <person name="Halldorsson B.V."/>
            <person name="Hannenhalli S."/>
            <person name="Turner R."/>
            <person name="Yooseph S."/>
            <person name="Lu F."/>
            <person name="Nusskern D.R."/>
            <person name="Shue B.C."/>
            <person name="Zheng X.H."/>
            <person name="Zhong F."/>
            <person name="Delcher A.L."/>
            <person name="Huson D.H."/>
            <person name="Kravitz S.A."/>
            <person name="Mouchard L."/>
            <person name="Reinert K."/>
            <person name="Remington K.A."/>
            <person name="Clark A.G."/>
            <person name="Waterman M.S."/>
            <person name="Eichler E.E."/>
            <person name="Adams M.D."/>
            <person name="Hunkapiller M.W."/>
            <person name="Myers E.W."/>
            <person name="Venter J.C."/>
        </authorList>
    </citation>
    <scope>NUCLEOTIDE SEQUENCE [LARGE SCALE GENOMIC DNA]</scope>
</reference>
<reference key="9">
    <citation type="journal article" date="2004" name="Genome Res.">
        <title>The status, quality, and expansion of the NIH full-length cDNA project: the Mammalian Gene Collection (MGC).</title>
        <authorList>
            <consortium name="The MGC Project Team"/>
        </authorList>
    </citation>
    <scope>NUCLEOTIDE SEQUENCE [LARGE SCALE MRNA] (ISOFORM 1)</scope>
    <source>
        <tissue>Lymph</tissue>
        <tissue>Testis</tissue>
    </source>
</reference>
<reference key="10">
    <citation type="submission" date="2007-03" db="UniProtKB">
        <authorList>
            <person name="Lubec G."/>
            <person name="Afjehi-Sadat L."/>
        </authorList>
    </citation>
    <scope>PROTEIN SEQUENCE OF 122-136 AND 276-293</scope>
    <scope>IDENTIFICATION BY MASS SPECTROMETRY</scope>
    <source>
        <tissue>Brain</tissue>
        <tissue>Cajal-Retzius cell</tissue>
    </source>
</reference>
<reference key="11">
    <citation type="journal article" date="2006" name="Science">
        <title>Ubiquitinated TDP-43 in frontotemporal lobar degeneration and amyotrophic lateral sclerosis.</title>
        <authorList>
            <person name="Neumann M."/>
            <person name="Sampathu D.M."/>
            <person name="Kwong L.K."/>
            <person name="Truax A.C."/>
            <person name="Micsenyi M.C."/>
            <person name="Chou T.T."/>
            <person name="Bruce J."/>
            <person name="Schuck T."/>
            <person name="Grossman M."/>
            <person name="Clark C.M."/>
            <person name="McCluskey L.F."/>
            <person name="Miller B.L."/>
            <person name="Masliah E."/>
            <person name="Mackenzie I.R."/>
            <person name="Feldman H."/>
            <person name="Feiden W."/>
            <person name="Kretzschmar H.A."/>
            <person name="Trojanowski J.Q."/>
            <person name="Lee V.M.-Y."/>
        </authorList>
    </citation>
    <scope>PROTEIN SEQUENCE OF 252-263; 276-293 AND 409-414</scope>
    <scope>SUBCELLULAR LOCATION</scope>
    <scope>PHOSPHORYLATION</scope>
    <scope>UBIQUITINATION</scope>
</reference>
<reference key="12">
    <citation type="journal article" date="2001" name="EMBO J.">
        <title>Nuclear factor TDP-43 and SR proteins promote in vitro and in vivo CFTR exon 9 skipping.</title>
        <authorList>
            <person name="Buratti E."/>
            <person name="Doerk T."/>
            <person name="Zuccato E."/>
            <person name="Pagani F."/>
            <person name="Romano M."/>
            <person name="Baralle F.E."/>
        </authorList>
    </citation>
    <scope>FUNCTION</scope>
</reference>
<reference key="13">
    <citation type="journal article" date="2001" name="J. Biol. Chem.">
        <title>Characterization and functional implications of the RNA binding properties of nuclear factor TDP-43, a novel splicing regulator of CFTR exon 9.</title>
        <authorList>
            <person name="Buratti E."/>
            <person name="Baralle F.E."/>
        </authorList>
    </citation>
    <scope>RNA-BINDING</scope>
    <scope>MUTAGENESIS</scope>
</reference>
<reference key="14">
    <citation type="journal article" date="2008" name="J. Cell Sci.">
        <title>Structural determinants of the cellular localization and shuttling of TDP-43.</title>
        <authorList>
            <person name="Ayala Y.M."/>
            <person name="Zago P."/>
            <person name="D'Ambrogio A."/>
            <person name="Xu Y.F."/>
            <person name="Petrucelli L."/>
            <person name="Buratti E."/>
            <person name="Baralle F.E."/>
        </authorList>
    </citation>
    <scope>SUBCELLULAR LOCATION</scope>
    <scope>MOTIF</scope>
</reference>
<reference key="15">
    <citation type="journal article" date="2009" name="Nucleic Acids Res.">
        <title>Functional mapping of the interaction between TDP-43 and hnRNP A2 in vivo.</title>
        <authorList>
            <person name="D'Ambrogio A."/>
            <person name="Buratti E."/>
            <person name="Stuani C."/>
            <person name="Guarnaccia C."/>
            <person name="Romano M."/>
            <person name="Ayala Y.M."/>
            <person name="Baralle F.E."/>
        </authorList>
    </citation>
    <scope>INTERACTION WITH HNRNPA2B1</scope>
</reference>
<reference key="16">
    <citation type="journal article" date="2009" name="Sci. Signal.">
        <title>Quantitative phosphoproteomic analysis of T cell receptor signaling reveals system-wide modulation of protein-protein interactions.</title>
        <authorList>
            <person name="Mayya V."/>
            <person name="Lundgren D.H."/>
            <person name="Hwang S.-I."/>
            <person name="Rezaul K."/>
            <person name="Wu L."/>
            <person name="Eng J.K."/>
            <person name="Rodionov V."/>
            <person name="Han D.K."/>
        </authorList>
    </citation>
    <scope>PHOSPHORYLATION [LARGE SCALE ANALYSIS] AT SER-292</scope>
    <scope>IDENTIFICATION BY MASS SPECTROMETRY [LARGE SCALE ANALYSIS]</scope>
    <source>
        <tissue>Leukemic T-cell</tissue>
    </source>
</reference>
<reference key="17">
    <citation type="journal article" date="2009" name="J. Neurochem.">
        <title>TDP-43 is recruited to stress granules in conditions of oxidative insult.</title>
        <authorList>
            <person name="Colombrita C."/>
            <person name="Zennaro E."/>
            <person name="Fallini C."/>
            <person name="Weber M."/>
            <person name="Sommacal A."/>
            <person name="Buratti E."/>
            <person name="Silani V."/>
            <person name="Ratti A."/>
        </authorList>
    </citation>
    <scope>SUBCELLULAR LOCATION</scope>
    <scope>FUNCTION</scope>
</reference>
<reference key="18">
    <citation type="journal article" date="2010" name="Cell. Mol. Neurobiol.">
        <title>TDP-43 dimerizes in human cells in culture.</title>
        <authorList>
            <person name="Shiina Y."/>
            <person name="Arima K."/>
            <person name="Tabunoki H."/>
            <person name="Satoh J."/>
        </authorList>
    </citation>
    <scope>SUBUNIT</scope>
</reference>
<reference key="19">
    <citation type="journal article" date="2010" name="Nature">
        <title>Ataxin-2 intermediate-length polyglutamine expansions are associated with increased risk for ALS.</title>
        <authorList>
            <person name="Elden A.C."/>
            <person name="Kim H.J."/>
            <person name="Hart M.P."/>
            <person name="Chen-Plotkin A.S."/>
            <person name="Johnson B.S."/>
            <person name="Fang X."/>
            <person name="Armakola M."/>
            <person name="Geser F."/>
            <person name="Greene R."/>
            <person name="Lu M.M."/>
            <person name="Padmanabhan A."/>
            <person name="Clay-Falcone D."/>
            <person name="McCluskey L."/>
            <person name="Elman L."/>
            <person name="Juhr D."/>
            <person name="Gruber P.J."/>
            <person name="Rub U."/>
            <person name="Auburger G."/>
            <person name="Trojanowski J.Q."/>
            <person name="Lee V.M."/>
            <person name="Van Deerlin V.M."/>
            <person name="Bonini N.M."/>
            <person name="Gitler A.D."/>
        </authorList>
    </citation>
    <scope>INTERACTION WITH ATXN2</scope>
    <scope>CHARACTERIZATION OF VARIANT ALS10 LYS-331</scope>
</reference>
<reference key="20">
    <citation type="journal article" date="2011" name="BMC Syst. Biol.">
        <title>Initial characterization of the human central proteome.</title>
        <authorList>
            <person name="Burkard T.R."/>
            <person name="Planyavsky M."/>
            <person name="Kaupe I."/>
            <person name="Breitwieser F.P."/>
            <person name="Buerckstuemmer T."/>
            <person name="Bennett K.L."/>
            <person name="Superti-Furga G."/>
            <person name="Colinge J."/>
        </authorList>
    </citation>
    <scope>IDENTIFICATION BY MASS SPECTROMETRY [LARGE SCALE ANALYSIS]</scope>
</reference>
<reference key="21">
    <citation type="journal article" date="2011" name="Nat. Neurosci.">
        <title>Characterizing the RNA targets and position-dependent splicing regulation by TDP-43.</title>
        <authorList>
            <person name="Tollervey J.R."/>
            <person name="Curk T."/>
            <person name="Rogelj B."/>
            <person name="Briese M."/>
            <person name="Cereda M."/>
            <person name="Kayikci M."/>
            <person name="Koenig J."/>
            <person name="Hortobagyi T."/>
            <person name="Nishimura A.L."/>
            <person name="Zupunski V."/>
            <person name="Patani R."/>
            <person name="Chandran S."/>
            <person name="Rot G."/>
            <person name="Zupan B."/>
            <person name="Shaw C.E."/>
            <person name="Ule J."/>
        </authorList>
    </citation>
    <scope>FUNCTION</scope>
</reference>
<reference key="22">
    <citation type="journal article" date="2013" name="Nucleic Acids Res.">
        <title>Characterizing TDP-43 interaction with its RNA targets.</title>
        <authorList>
            <person name="Bhardwaj A."/>
            <person name="Myers M.P."/>
            <person name="Buratti E."/>
            <person name="Baralle F.E."/>
        </authorList>
    </citation>
    <scope>FUNCTION</scope>
    <scope>RNA-BINDING</scope>
</reference>
<reference key="23">
    <citation type="journal article" date="2013" name="J. Neurochem.">
        <title>TDP-43 associates with stalled ribosomes and contributes to cell survival during cellular stress.</title>
        <authorList>
            <person name="Higashi S."/>
            <person name="Kabuta T."/>
            <person name="Nagai Y."/>
            <person name="Tsuchiya Y."/>
            <person name="Akiyama H."/>
            <person name="Wada K."/>
        </authorList>
    </citation>
    <scope>FUNCTION</scope>
    <scope>SUBCELLULAR LOCATION</scope>
    <scope>PHOSPHORYLATION</scope>
</reference>
<reference key="24">
    <citation type="journal article" date="2013" name="Biochim. Biophys. Acta">
        <title>Ubiquilin-2 (UBQLN2) binds with high affinity to the C-terminal region of TDP-43 and modulates TDP-43 levels in H4 cells: characterization of inhibition by nucleic acids and 4-aminoquinolines.</title>
        <authorList>
            <person name="Cassel J.A."/>
            <person name="Reitz A.B."/>
        </authorList>
    </citation>
    <scope>INTERACTION WITH UBQLN2</scope>
</reference>
<reference key="25">
    <citation type="journal article" date="2013" name="J. Proteome Res.">
        <title>Toward a comprehensive characterization of a human cancer cell phosphoproteome.</title>
        <authorList>
            <person name="Zhou H."/>
            <person name="Di Palma S."/>
            <person name="Preisinger C."/>
            <person name="Peng M."/>
            <person name="Polat A.N."/>
            <person name="Heck A.J."/>
            <person name="Mohammed S."/>
        </authorList>
    </citation>
    <scope>PHOSPHORYLATION [LARGE SCALE ANALYSIS] AT SER-183 AND SER-292</scope>
    <scope>IDENTIFICATION BY MASS SPECTROMETRY [LARGE SCALE ANALYSIS]</scope>
    <source>
        <tissue>Cervix carcinoma</tissue>
        <tissue>Erythroleukemia</tissue>
    </source>
</reference>
<reference key="26">
    <citation type="journal article" date="2014" name="J. Proteomics">
        <title>An enzyme assisted RP-RPLC approach for in-depth analysis of human liver phosphoproteome.</title>
        <authorList>
            <person name="Bian Y."/>
            <person name="Song C."/>
            <person name="Cheng K."/>
            <person name="Dong M."/>
            <person name="Wang F."/>
            <person name="Huang J."/>
            <person name="Sun D."/>
            <person name="Wang L."/>
            <person name="Ye M."/>
            <person name="Zou H."/>
        </authorList>
    </citation>
    <scope>PHOSPHORYLATION [LARGE SCALE ANALYSIS] AT SER-292</scope>
    <scope>IDENTIFICATION BY MASS SPECTROMETRY [LARGE SCALE ANALYSIS]</scope>
    <source>
        <tissue>Liver</tissue>
    </source>
</reference>
<reference key="27">
    <citation type="journal article" date="2014" name="Mol. Cell. Proteomics">
        <title>Immunoaffinity enrichment and mass spectrometry analysis of protein methylation.</title>
        <authorList>
            <person name="Guo A."/>
            <person name="Gu H."/>
            <person name="Zhou J."/>
            <person name="Mulhern D."/>
            <person name="Wang Y."/>
            <person name="Lee K.A."/>
            <person name="Yang V."/>
            <person name="Aguiar M."/>
            <person name="Kornhauser J."/>
            <person name="Jia X."/>
            <person name="Ren J."/>
            <person name="Beausoleil S.A."/>
            <person name="Silva J.C."/>
            <person name="Vemulapalli V."/>
            <person name="Bedford M.T."/>
            <person name="Comb M.J."/>
        </authorList>
    </citation>
    <scope>METHYLATION [LARGE SCALE ANALYSIS] AT ARG-293</scope>
    <scope>IDENTIFICATION BY MASS SPECTROMETRY [LARGE SCALE ANALYSIS]</scope>
    <source>
        <tissue>Colon carcinoma</tissue>
    </source>
</reference>
<reference key="28">
    <citation type="journal article" date="2014" name="Nat. Neurosci.">
        <title>Mutations in the matrin 3 gene cause familial amyotrophic lateral sclerosis.</title>
        <authorList>
            <person name="Johnson J.O."/>
            <person name="Pioro E.P."/>
            <person name="Boehringer A."/>
            <person name="Chia R."/>
            <person name="Feit H."/>
            <person name="Renton A.E."/>
            <person name="Pliner H.A."/>
            <person name="Abramzon Y."/>
            <person name="Marangi G."/>
            <person name="Winborn B.J."/>
            <person name="Gibbs J.R."/>
            <person name="Nalls M.A."/>
            <person name="Morgan S."/>
            <person name="Shoai M."/>
            <person name="Hardy J."/>
            <person name="Pittman A."/>
            <person name="Orrell R.W."/>
            <person name="Malaspina A."/>
            <person name="Sidle K.C."/>
            <person name="Fratta P."/>
            <person name="Harms M.B."/>
            <person name="Baloh R.H."/>
            <person name="Pestronk A."/>
            <person name="Weihl C.C."/>
            <person name="Rogaeva E."/>
            <person name="Zinman L."/>
            <person name="Drory V.E."/>
            <person name="Borghero G."/>
            <person name="Mora G."/>
            <person name="Calvo A."/>
            <person name="Rothstein J.D."/>
            <person name="Drepper C."/>
            <person name="Sendtner M."/>
            <person name="Singleton A.B."/>
            <person name="Taylor J.P."/>
            <person name="Cookson M.R."/>
            <person name="Restagno G."/>
            <person name="Sabatelli M."/>
            <person name="Bowser R."/>
            <person name="Chio A."/>
            <person name="Traynor B.J."/>
        </authorList>
    </citation>
    <scope>INTERACTION WITH MATR3</scope>
</reference>
<reference key="29">
    <citation type="journal article" date="2014" name="Nat. Struct. Mol. Biol.">
        <title>Uncovering global SUMOylation signaling networks in a site-specific manner.</title>
        <authorList>
            <person name="Hendriks I.A."/>
            <person name="D'Souza R.C."/>
            <person name="Yang B."/>
            <person name="Verlaan-de Vries M."/>
            <person name="Mann M."/>
            <person name="Vertegaal A.C."/>
        </authorList>
    </citation>
    <scope>SUMOYLATION [LARGE SCALE ANALYSIS] AT LYS-181</scope>
    <scope>IDENTIFICATION BY MASS SPECTROMETRY [LARGE SCALE ANALYSIS]</scope>
</reference>
<reference key="30">
    <citation type="journal article" date="2015" name="Cell Rep.">
        <title>SUMO-2 orchestrates chromatin modifiers in response to DNA damage.</title>
        <authorList>
            <person name="Hendriks I.A."/>
            <person name="Treffers L.W."/>
            <person name="Verlaan-de Vries M."/>
            <person name="Olsen J.V."/>
            <person name="Vertegaal A.C."/>
        </authorList>
    </citation>
    <scope>SUMOYLATION [LARGE SCALE ANALYSIS] AT LYS-102 AND LYS-181</scope>
    <scope>IDENTIFICATION BY MASS SPECTROMETRY [LARGE SCALE ANALYSIS]</scope>
</reference>
<reference key="31">
    <citation type="journal article" date="2016" name="PLoS ONE">
        <title>USP7 and TDP-43: pleiotropic regulation of cryptochrome protein stability paces the oscillation of the mammalian circadian clock.</title>
        <authorList>
            <person name="Hirano A."/>
            <person name="Nakagawa T."/>
            <person name="Yoshitane H."/>
            <person name="Oyama M."/>
            <person name="Kozuka-Hata H."/>
            <person name="Lanjakornsiripan D."/>
            <person name="Fukada Y."/>
        </authorList>
    </citation>
    <scope>FUNCTION</scope>
    <scope>INTERACTION WITH CRY2</scope>
</reference>
<reference key="32">
    <citation type="journal article" date="2017" name="Nat. Struct. Mol. Biol.">
        <title>Site-specific mapping of the human SUMO proteome reveals co-modification with phosphorylation.</title>
        <authorList>
            <person name="Hendriks I.A."/>
            <person name="Lyon D."/>
            <person name="Young C."/>
            <person name="Jensen L.J."/>
            <person name="Vertegaal A.C."/>
            <person name="Nielsen M.L."/>
        </authorList>
    </citation>
    <scope>SUMOYLATION [LARGE SCALE ANALYSIS] AT LYS-79; LYS-84; LYS-95; LYS-181 AND LYS-263</scope>
    <scope>IDENTIFICATION BY MASS SPECTROMETRY [LARGE SCALE ANALYSIS]</scope>
</reference>
<reference key="33">
    <citation type="journal article" date="2017" name="Sci. Rep.">
        <title>TDP-43 stabilises the processing intermediates of mitochondrial transcripts.</title>
        <authorList>
            <person name="Izumikawa K."/>
            <person name="Nobe Y."/>
            <person name="Yoshikawa H."/>
            <person name="Ishikawa H."/>
            <person name="Miura Y."/>
            <person name="Nakayama H."/>
            <person name="Nonaka T."/>
            <person name="Hasegawa M."/>
            <person name="Egawa N."/>
            <person name="Inoue H."/>
            <person name="Nishikawa K."/>
            <person name="Yamano K."/>
            <person name="Simpson R.J."/>
            <person name="Taoka M."/>
            <person name="Yamauchi Y."/>
            <person name="Isobe T."/>
            <person name="Takahashi N."/>
        </authorList>
    </citation>
    <scope>FUNCTION</scope>
    <scope>SUBCELLULAR LOCATION</scope>
</reference>
<reference key="34">
    <citation type="journal article" date="2019" name="FEBS Lett.">
        <title>TDP-43 accelerates deadenylation of target mRNAs by recruiting Caf1 deadenylase.</title>
        <authorList>
            <person name="Fukushima M."/>
            <person name="Hosoda N."/>
            <person name="Chifu K."/>
            <person name="Hoshino S.I."/>
        </authorList>
    </citation>
    <scope>FUNCTION</scope>
    <scope>INTERACTION WITH CNOT7</scope>
</reference>
<reference key="35">
    <citation type="journal article" date="2018" name="Nature">
        <title>TDP-43 and RNA form amyloid-like myo-granules in regenerating muscle.</title>
        <authorList>
            <person name="Vogler T.O."/>
            <person name="Wheeler J.R."/>
            <person name="Nguyen E.D."/>
            <person name="Hughes M.P."/>
            <person name="Britson K.A."/>
            <person name="Lester E."/>
            <person name="Rao B."/>
            <person name="Betta N.D."/>
            <person name="Whitney O.N."/>
            <person name="Ewachiw T.E."/>
            <person name="Gomes E."/>
            <person name="Shorter J."/>
            <person name="Lloyd T.E."/>
            <person name="Eisenberg D.S."/>
            <person name="Taylor J.P."/>
            <person name="Johnson A.M."/>
            <person name="Olwin B.B."/>
            <person name="Parker R."/>
        </authorList>
    </citation>
    <scope>FUNCTION</scope>
    <scope>SUBCELLULAR LOCATION</scope>
</reference>
<reference key="36">
    <citation type="submission" date="2005-11" db="PDB data bank">
        <title>Solution structure of the RNA binding domains of TAR DNA-binding protein-43.</title>
        <authorList>
            <consortium name="RIKEN structural genomics initiative (RSGI)"/>
        </authorList>
    </citation>
    <scope>STRUCTURE BY NMR OF 96-267</scope>
</reference>
<reference key="37">
    <citation type="submission" date="2009-02" db="PDB data bank">
        <title>Solution structure of RRM domain in tar DNA-binding protein-43.</title>
        <authorList>
            <consortium name="RIKEN structural genomics initiative (RSGI)"/>
        </authorList>
    </citation>
    <scope>STRUCTURE BY NMR OF 193-267</scope>
</reference>
<reference key="38">
    <citation type="journal article" date="2013" name="Nat. Struct. Mol. Biol.">
        <title>Molecular basis of UG-rich RNA recognition by the human splicing factor TDP-43.</title>
        <authorList>
            <person name="Lukavsky P.J."/>
            <person name="Daujotyte D."/>
            <person name="Tollervey J.R."/>
            <person name="Ule J."/>
            <person name="Stuani C."/>
            <person name="Buratti E."/>
            <person name="Baralle F.E."/>
            <person name="Damberger F.F."/>
            <person name="Allain F.H."/>
        </authorList>
    </citation>
    <scope>STRUCTURE BY NMR OF 102-269</scope>
    <scope>RNA-BINDING</scope>
    <scope>FUNCTION</scope>
</reference>
<reference key="39">
    <citation type="journal article" date="2014" name="Nucleic Acids Res.">
        <title>The crystal structure of TDP-43 RRM1-DNA complex reveals the specific recognition for UG- and TG-rich nucleic acids.</title>
        <authorList>
            <person name="Kuo P.H."/>
            <person name="Chiang C.H."/>
            <person name="Wang Y.T."/>
            <person name="Doudeva L.G."/>
            <person name="Yuan H.S."/>
        </authorList>
    </citation>
    <scope>X-RAY CRYSTALLOGRAPHY (2.75 ANGSTROMS) OF 103-179</scope>
    <scope>FUNCTION</scope>
    <scope>SUBUNIT</scope>
</reference>
<reference key="40">
    <citation type="journal article" date="2017" name="Nat. Commun.">
        <title>Functional and dynamic polymerization of the ALS-linked protein TDP-43 antagonizes its pathologic aggregation.</title>
        <authorList>
            <person name="Afroz T."/>
            <person name="Hock E.M."/>
            <person name="Ernst P."/>
            <person name="Foglieni C."/>
            <person name="Jambeau M."/>
            <person name="Gilhespy L.A.B."/>
            <person name="Laferriere F."/>
            <person name="Maniecka Z."/>
            <person name="Plueckthun A."/>
            <person name="Mittl P."/>
            <person name="Paganetti P."/>
            <person name="Allain F.H.T."/>
            <person name="Polymenidou M."/>
        </authorList>
    </citation>
    <scope>X-RAY CRYSTALLOGRAPHY (2.10 ANGSTROMS) OF 2-80</scope>
    <scope>SUBUNIT</scope>
    <scope>SUBCELLULAR LOCATION</scope>
</reference>
<reference key="41">
    <citation type="journal article" date="2018" name="EMBO J.">
        <title>A single N-terminal phosphomimic disrupts TDP-43 polymerization, phase separation, and RNA splicing.</title>
        <authorList>
            <person name="Wang A."/>
            <person name="Conicella A.E."/>
            <person name="Schmidt H.B."/>
            <person name="Martin E.W."/>
            <person name="Rhoads S.N."/>
            <person name="Reeb A.N."/>
            <person name="Nourse A."/>
            <person name="Ramirez Montero D."/>
            <person name="Ryan V.H."/>
            <person name="Rohatgi R."/>
            <person name="Shewmaker F."/>
            <person name="Naik M.T."/>
            <person name="Mittag T."/>
            <person name="Ayala Y.M."/>
            <person name="Fawzi N.L."/>
        </authorList>
    </citation>
    <scope>STRUCTURE BY NMR OF 1-80</scope>
    <scope>MUTAGENESIS OF SER-48</scope>
    <scope>SUBUNIT</scope>
    <scope>FUNCTION</scope>
    <scope>SUBCELLULAR LOCATION</scope>
</reference>
<reference key="42">
    <citation type="journal article" date="2018" name="Nat. Struct. Mol. Biol.">
        <title>Atomic-level evidence for packing and positional amyloid polymorphism by segment from TDP-43 RRM2.</title>
        <authorList>
            <person name="Guenther E.L."/>
            <person name="Ge P."/>
            <person name="Trinh H."/>
            <person name="Sawaya M.R."/>
            <person name="Cascio D."/>
            <person name="Boyer D.R."/>
            <person name="Gonen T."/>
            <person name="Zhou Z.H."/>
            <person name="Eisenberg D.S."/>
        </authorList>
    </citation>
    <scope>STRUCTURE BY ELECTRON MICROSCOPY (1.40 ANGSTROMS) OF 247-257</scope>
</reference>
<reference key="43">
    <citation type="journal article" date="2008" name="Ann. Neurol.">
        <title>TDP-43 A315T mutation in familial motor neuron disease.</title>
        <authorList>
            <person name="Gitcho M.A."/>
            <person name="Baloh R.H."/>
            <person name="Chakraverty S."/>
            <person name="Mayo K."/>
            <person name="Norton J.B."/>
            <person name="Levitch D."/>
            <person name="Hatanpaa K.J."/>
            <person name="White C.L. III"/>
            <person name="Bigio E.H."/>
            <person name="Caselli R."/>
            <person name="Baker M."/>
            <person name="Al-Lozi M.T."/>
            <person name="Morris J.C."/>
            <person name="Pestronk A."/>
            <person name="Rademakers R."/>
            <person name="Goate A.M."/>
            <person name="Cairns N.J."/>
        </authorList>
    </citation>
    <scope>VARIANT ALS10 THR-315</scope>
</reference>
<reference key="44">
    <citation type="journal article" date="2008" name="Ann. Neurol.">
        <title>TDP-43 mutation in familial amyotrophic lateral sclerosis.</title>
        <authorList>
            <person name="Yokoseki A."/>
            <person name="Shiga A."/>
            <person name="Tan C.F."/>
            <person name="Tagawa A."/>
            <person name="Kaneko H."/>
            <person name="Koyama A."/>
            <person name="Eguchi H."/>
            <person name="Tsujino A."/>
            <person name="Ikeuchi T."/>
            <person name="Kakita A."/>
            <person name="Okamoto K."/>
            <person name="Nishizawa M."/>
            <person name="Takahashi H."/>
            <person name="Onodera O."/>
        </authorList>
    </citation>
    <scope>VARIANT ALS10 ARG-343</scope>
</reference>
<reference key="45">
    <citation type="journal article" date="2008" name="Lancet Neurol.">
        <title>TARDBP mutations in amyotrophic lateral sclerosis with TDP-43 neuropathology: a genetic and histopathological analysis.</title>
        <authorList>
            <person name="Van Deerlin V.M."/>
            <person name="Leverenz J.B."/>
            <person name="Bekris L.M."/>
            <person name="Bird T.D."/>
            <person name="Yuan W."/>
            <person name="Elman L.B."/>
            <person name="Clay D."/>
            <person name="Wood E.M."/>
            <person name="Chen-Plotkin A.S."/>
            <person name="Martinez-Lage M."/>
            <person name="Steinbart E."/>
            <person name="McCluskey L."/>
            <person name="Grossman M."/>
            <person name="Neumann M."/>
            <person name="Wu I.-L."/>
            <person name="Yang W.-S."/>
            <person name="Kalb R."/>
            <person name="Galasko D.R."/>
            <person name="Montine T.J."/>
            <person name="Trojanowski J.Q."/>
            <person name="Lee V.M.-Y."/>
            <person name="Schellenberg G.D."/>
            <person name="Yu C.-E."/>
        </authorList>
    </citation>
    <scope>VARIANTS ALS10 ALA-290 AND SER-298</scope>
</reference>
<reference key="46">
    <citation type="journal article" date="2008" name="Nat. Genet.">
        <title>TARDBP mutations in individuals with sporadic and familial amyotrophic lateral sclerosis.</title>
        <authorList>
            <person name="Kabashi E."/>
            <person name="Valdmanis P.N."/>
            <person name="Dion P."/>
            <person name="Spiegelman D."/>
            <person name="McConkey B.J."/>
            <person name="Vande Velde C."/>
            <person name="Bouchard J.-P."/>
            <person name="Lacomblez L."/>
            <person name="Pochigaeva K."/>
            <person name="Salachas F."/>
            <person name="Pradat P.-F."/>
            <person name="Camu W."/>
            <person name="Meininger V."/>
            <person name="Dupre N."/>
            <person name="Rouleau G.A."/>
        </authorList>
    </citation>
    <scope>VARIANTS ALS10 GLY-169; SER-287; THR-315; CYS-348; SER-361; THR-382; ASP-390 AND SER-390</scope>
    <scope>VARIANT VAL-90</scope>
</reference>
<reference key="47">
    <citation type="journal article" date="2008" name="Science">
        <title>TDP-43 mutations in familial and sporadic amyotrophic lateral sclerosis.</title>
        <authorList>
            <person name="Sreedharan J."/>
            <person name="Blair I.P."/>
            <person name="Tripathi V.B."/>
            <person name="Hu X."/>
            <person name="Vance C."/>
            <person name="Rogelj B."/>
            <person name="Ackerley S."/>
            <person name="Durnall J.C."/>
            <person name="Williams K.L."/>
            <person name="Buratti E."/>
            <person name="Baralle F."/>
            <person name="de Belleroche J."/>
            <person name="Mitchell J.D."/>
            <person name="Leigh P.N."/>
            <person name="Al-Chalabi A."/>
            <person name="Miller C.C."/>
            <person name="Nicholson G."/>
            <person name="Shaw C.E."/>
        </authorList>
    </citation>
    <scope>VARIANTS ALS10 ALA-294; LYS-331 AND VAL-337</scope>
    <scope>VARIANT VAL-90</scope>
    <scope>CHARACTERIZATION OF VARIANTS ALS10 LYS-331 AND VAL-337</scope>
</reference>
<reference key="48">
    <citation type="journal article" date="2009" name="Ann. Neurol.">
        <title>TARDBP mutations in motoneuron disease with frontotemporal lobar degeneration.</title>
        <authorList>
            <consortium name="French clinical and genetic research network on frontotemporal lobar degeneration/frontotemporal lobar degeneration with motoneuron disease"/>
            <person name="Benajiba L."/>
            <person name="Le Ber I."/>
            <person name="Camuzat A."/>
            <person name="Lacoste M."/>
            <person name="Thomas-Anterion C."/>
            <person name="Couratier P."/>
            <person name="Legallic S."/>
            <person name="Salachas F."/>
            <person name="Hannequin D."/>
            <person name="Decousus M."/>
            <person name="Lacomblez L."/>
            <person name="Guedj E."/>
            <person name="Golfier V."/>
            <person name="Camu W."/>
            <person name="Dubois B."/>
            <person name="Campion D."/>
            <person name="Meininger V."/>
            <person name="Brice A."/>
        </authorList>
    </citation>
    <scope>INVOLVEMENT OF VARIANT ALS10 SER-295 IN FRONTOTEMPORAL LOBAR DEGENERATION WITH MOTOR NEURON DISEASE</scope>
</reference>
<reference key="49">
    <citation type="journal article" date="2009" name="Hum. Mutat.">
        <title>High frequency of TARDBP gene mutations in Italian patients with amyotrophic lateral sclerosis.</title>
        <authorList>
            <person name="Corrado L."/>
            <person name="Ratti A."/>
            <person name="Gellera C."/>
            <person name="Buratti E."/>
            <person name="Castellotti B."/>
            <person name="Carlomagno Y."/>
            <person name="Ticozzi N."/>
            <person name="Mazzini L."/>
            <person name="Testa L."/>
            <person name="Taroni F."/>
            <person name="Baralle F.E."/>
            <person name="Silani V."/>
            <person name="D'Alfonso S."/>
        </authorList>
    </citation>
    <scope>VARIANTS ALS10 SER-267; SER-287; VAL-294; SER-295; ARG-295; ASN-332; ASP-335; VAL-337; PRO-379; CYS-379; THR-382 AND LEU-393</scope>
</reference>
<reference key="50">
    <citation type="journal article" date="2009" name="Hum. Mutat.">
        <title>Mutation within TARDBP leads to frontotemporal dementia without motor neuron disease.</title>
        <authorList>
            <person name="Borroni B."/>
            <person name="Bonvicini C."/>
            <person name="Alberici A."/>
            <person name="Buratti E."/>
            <person name="Agosti C."/>
            <person name="Archetti S."/>
            <person name="Papetti A."/>
            <person name="Stuani C."/>
            <person name="Di Luca M."/>
            <person name="Gennarelli M."/>
            <person name="Padovani A."/>
        </authorList>
    </citation>
    <scope>INVOLVEMENT OF VARIANT ALS10 SER-267 IN FRONTOTEMPORAL DEMENTIA</scope>
</reference>
<reference key="51">
    <citation type="journal article" date="2009" name="Neuromuscul. Disord.">
        <title>Genetic variants in the promoter of TARDBP in sporadic amyotrophic lateral sclerosis.</title>
        <authorList>
            <person name="Luquin N."/>
            <person name="Yu B."/>
            <person name="Saunderson R.B."/>
            <person name="Trent R.J."/>
            <person name="Pamphlett R."/>
        </authorList>
    </citation>
    <scope>VARIANT ALS10 ALA-294</scope>
</reference>
<reference key="52">
    <citation type="journal article" date="2010" name="Neurogenetics">
        <title>Broad clinical phenotypes associated with TAR-DNA binding protein (TARDBP) mutations in amyotrophic lateral sclerosis.</title>
        <authorList>
            <person name="Kirby J."/>
            <person name="Goodall E.F."/>
            <person name="Smith W."/>
            <person name="Highley J.R."/>
            <person name="Masanzu R."/>
            <person name="Hartley J.A."/>
            <person name="Hibberd R."/>
            <person name="Hollinger H.C."/>
            <person name="Wharton S.B."/>
            <person name="Morrison K.E."/>
            <person name="Ince P.G."/>
            <person name="McDermott C.J."/>
            <person name="Shaw P.J."/>
        </authorList>
    </citation>
    <scope>VARIANTS ALS10 SER-287; VAL-321; VAL-337 AND VAL-348</scope>
    <scope>VARIANT VAL-90</scope>
    <scope>CHARACTERIZATION OF VARIANTS ALS10 SER-287; VAL-321 AND VAL-337</scope>
    <scope>FUNCTION</scope>
</reference>
<reference key="53">
    <citation type="journal article" date="2011" name="Arch. Neurol.">
        <title>Large proportion of amyotrophic lateral sclerosis cases in Sardinia due to a single founder mutation of the TARDBP gene.</title>
        <authorList>
            <person name="Chio A."/>
            <person name="Borghero G."/>
            <person name="Pugliatti M."/>
            <person name="Ticca A."/>
            <person name="Calvo A."/>
            <person name="Moglia C."/>
            <person name="Mutani R."/>
            <person name="Brunetti M."/>
            <person name="Ossola I."/>
            <person name="Marrosu M.G."/>
            <person name="Murru M.R."/>
            <person name="Floris G."/>
            <person name="Cannas A."/>
            <person name="Parish L.D."/>
            <person name="Cossu P."/>
            <person name="Abramzon Y."/>
            <person name="Johnson J.O."/>
            <person name="Nalls M.A."/>
            <person name="Arepalli S."/>
            <person name="Chong S."/>
            <person name="Hernandez D.G."/>
            <person name="Traynor B.J."/>
            <person name="Restagno G."/>
        </authorList>
    </citation>
    <scope>VARIANT ALS10 THR-382</scope>
</reference>
<reference key="54">
    <citation type="journal article" date="2012" name="Clin. Genet.">
        <title>High frequency of the TARDBP p.Ala382Thr mutation in Sardinian patients with amyotrophic lateral sclerosis.</title>
        <authorList>
            <person name="Orru S."/>
            <person name="Manolakos E."/>
            <person name="Orru N."/>
            <person name="Kokotas H."/>
            <person name="Mascia V."/>
            <person name="Carcassi C."/>
            <person name="Petersen M.B."/>
        </authorList>
    </citation>
    <scope>VARIANT ALS10 THR-382</scope>
</reference>
<reference key="55">
    <citation type="journal article" date="2012" name="J. Hum. Genet.">
        <title>Novel TARDBP mutations in Nordic ALS patients.</title>
        <authorList>
            <person name="Chiang H.H."/>
            <person name="Andersen P.M."/>
            <person name="Tysnes O.B."/>
            <person name="Gredal O."/>
            <person name="Christensen P.B."/>
            <person name="Graff C."/>
        </authorList>
    </citation>
    <scope>VARIANT VAL-90</scope>
    <scope>VARIANTS ALS10 ARG-357; THR-361 AND PRO-379</scope>
</reference>
<reference key="56">
    <citation type="journal article" date="2015" name="Brain">
        <title>Peptidylprolyl isomerase A governs TARDBP function and assembly in heterogeneous nuclear ribonucleoprotein complexes.</title>
        <authorList>
            <person name="Lauranzano E."/>
            <person name="Pozzi S."/>
            <person name="Pasetto L."/>
            <person name="Stucchi R."/>
            <person name="Massignan T."/>
            <person name="Paolella K."/>
            <person name="Mombrini M."/>
            <person name="Nardo G."/>
            <person name="Lunetta C."/>
            <person name="Corbo M."/>
            <person name="Mora G."/>
            <person name="Bendotti C."/>
            <person name="Bonetto V."/>
        </authorList>
    </citation>
    <scope>CHARACTERIZATION OF VARIANTS ALS10 VAL-348; THR-315 AND SER-361</scope>
    <scope>FUNCTION</scope>
    <scope>SUBCELLULAR LOCATION</scope>
    <scope>INTERACTION WITH PPIA</scope>
    <scope>MUTAGENESIS OF 103-THR--SER-183</scope>
</reference>
<reference key="57">
    <citation type="journal article" date="2020" name="Cell">
        <title>TDP-43 triggers mitochondrial DNA release via mPTP to activate cGAS/STING in ALS.</title>
        <authorList>
            <person name="Yu C.H."/>
            <person name="Davidson S."/>
            <person name="Harapas C.R."/>
            <person name="Hilton J.B."/>
            <person name="Mlodzianoski M.J."/>
            <person name="Laohamonthonkul P."/>
            <person name="Louis C."/>
            <person name="Low R.R.J."/>
            <person name="Moecking J."/>
            <person name="De Nardo D."/>
            <person name="Balka K.R."/>
            <person name="Calleja D.J."/>
            <person name="Moghaddas F."/>
            <person name="Ni E."/>
            <person name="McLean C.A."/>
            <person name="Samson A.L."/>
            <person name="Tyebji S."/>
            <person name="Tonkin C.J."/>
            <person name="Bye C.R."/>
            <person name="Turner B.J."/>
            <person name="Pepin G."/>
            <person name="Gantier M.P."/>
            <person name="Rogers K.L."/>
            <person name="McArthur K."/>
            <person name="Crouch P.J."/>
            <person name="Masters S.L."/>
        </authorList>
    </citation>
    <scope>CHARACTERIZATION OF VARIANTS ALS10 THR-315 AND LYS-331</scope>
    <scope>SUBCELLULAR LOCATION</scope>
</reference>
<sequence length="414" mass="44740">MSEYIRVTEDENDEPIEIPSEDDGTVLLSTVTAQFPGACGLRYRNPVSQCMRGVRLVEGILHAPDAGWGNLVYVVNYPKDNKRKMDETDASSAVKVKRAVQKTSDLIVLGLPWKTTEQDLKEYFSTFGEVLMVQVKKDLKTGHSKGFGFVRFTEYETQVKVMSQRHMIDGRWCDCKLPNSKQSQDEPLRSRKVFVGRCTEDMTEDELREFFSQYGDVMDVFIPKPFRAFAFVTFADDQIAQSLCGEDLIIKGISVHISNAEPKHNSNRQLERSGRFGGNPGGFGNQGGFGNSRGGGAGLGNNQGSNMGGGMNFGAFSINPAMMAAAQAALQSSWGMMGMLASQQNQSGPSGNNQNQGNMQREPNQAFGSGNNSYSGSNSGAAIGWGSASNAGSGSGFNGGFGSSMDSKSSGWGM</sequence>